<proteinExistence type="evidence at protein level"/>
<dbReference type="EMBL" id="V00355">
    <property type="protein sequence ID" value="CAA23648.1"/>
    <property type="molecule type" value="Genomic_DNA"/>
</dbReference>
<dbReference type="EMBL" id="U18997">
    <property type="protein sequence ID" value="AAA58139.1"/>
    <property type="molecule type" value="Genomic_DNA"/>
</dbReference>
<dbReference type="EMBL" id="U00096">
    <property type="protein sequence ID" value="AAC76367.1"/>
    <property type="molecule type" value="Genomic_DNA"/>
</dbReference>
<dbReference type="EMBL" id="AP009048">
    <property type="protein sequence ID" value="BAE77949.1"/>
    <property type="molecule type" value="Genomic_DNA"/>
</dbReference>
<dbReference type="EMBL" id="AF312716">
    <property type="protein sequence ID" value="AAG30936.1"/>
    <property type="molecule type" value="Genomic_DNA"/>
</dbReference>
<dbReference type="EMBL" id="AF312717">
    <property type="protein sequence ID" value="AAG30937.1"/>
    <property type="molecule type" value="Genomic_DNA"/>
</dbReference>
<dbReference type="EMBL" id="V00354">
    <property type="protein sequence ID" value="CAA23647.1"/>
    <property type="molecule type" value="Genomic_DNA"/>
</dbReference>
<dbReference type="EMBL" id="AH002539">
    <property type="protein sequence ID" value="AAA50988.1"/>
    <property type="molecule type" value="Genomic_DNA"/>
</dbReference>
<dbReference type="PIR" id="S13738">
    <property type="entry name" value="R3EC12"/>
</dbReference>
<dbReference type="RefSeq" id="NP_417801.1">
    <property type="nucleotide sequence ID" value="NC_000913.3"/>
</dbReference>
<dbReference type="RefSeq" id="WP_000246815.1">
    <property type="nucleotide sequence ID" value="NZ_STEB01000004.1"/>
</dbReference>
<dbReference type="PDB" id="1MJ1">
    <property type="method" value="EM"/>
    <property type="resolution" value="13.00 A"/>
    <property type="chains" value="O=5-123"/>
</dbReference>
<dbReference type="PDB" id="1ZN1">
    <property type="method" value="EM"/>
    <property type="resolution" value="14.10 A"/>
    <property type="chains" value="L=28-124"/>
</dbReference>
<dbReference type="PDB" id="2YKR">
    <property type="method" value="EM"/>
    <property type="resolution" value="9.80 A"/>
    <property type="chains" value="L=2-124"/>
</dbReference>
<dbReference type="PDB" id="3DEG">
    <property type="method" value="EM"/>
    <property type="chains" value="D=2-124"/>
</dbReference>
<dbReference type="PDB" id="3EP2">
    <property type="method" value="EM"/>
    <property type="chains" value="L=2-124"/>
</dbReference>
<dbReference type="PDB" id="3EQ3">
    <property type="method" value="EM"/>
    <property type="chains" value="L=2-124"/>
</dbReference>
<dbReference type="PDB" id="3EQ4">
    <property type="method" value="EM"/>
    <property type="chains" value="L=2-124"/>
</dbReference>
<dbReference type="PDB" id="3IY8">
    <property type="method" value="EM"/>
    <property type="resolution" value="14.10 A"/>
    <property type="chains" value="L=2-124"/>
</dbReference>
<dbReference type="PDB" id="3J0D">
    <property type="method" value="EM"/>
    <property type="resolution" value="11.10 A"/>
    <property type="chains" value="I=2-124"/>
</dbReference>
<dbReference type="PDB" id="3J0E">
    <property type="method" value="EM"/>
    <property type="resolution" value="9.90 A"/>
    <property type="chains" value="F=2-124"/>
</dbReference>
<dbReference type="PDB" id="3J9Y">
    <property type="method" value="EM"/>
    <property type="resolution" value="3.90 A"/>
    <property type="chains" value="l=1-124"/>
</dbReference>
<dbReference type="PDB" id="3J9Z">
    <property type="method" value="EM"/>
    <property type="resolution" value="3.60 A"/>
    <property type="chains" value="SL=2-124"/>
</dbReference>
<dbReference type="PDB" id="3JA1">
    <property type="method" value="EM"/>
    <property type="resolution" value="3.60 A"/>
    <property type="chains" value="SL=2-124"/>
</dbReference>
<dbReference type="PDB" id="3JBU">
    <property type="method" value="EM"/>
    <property type="resolution" value="3.64 A"/>
    <property type="chains" value="L=1-124"/>
</dbReference>
<dbReference type="PDB" id="3JBV">
    <property type="method" value="EM"/>
    <property type="resolution" value="3.32 A"/>
    <property type="chains" value="L=1-124"/>
</dbReference>
<dbReference type="PDB" id="3JCD">
    <property type="method" value="EM"/>
    <property type="resolution" value="3.70 A"/>
    <property type="chains" value="l=1-124"/>
</dbReference>
<dbReference type="PDB" id="3JCE">
    <property type="method" value="EM"/>
    <property type="resolution" value="3.20 A"/>
    <property type="chains" value="l=1-124"/>
</dbReference>
<dbReference type="PDB" id="3JCJ">
    <property type="method" value="EM"/>
    <property type="resolution" value="3.70 A"/>
    <property type="chains" value="t=1-124"/>
</dbReference>
<dbReference type="PDB" id="3JCN">
    <property type="method" value="EM"/>
    <property type="resolution" value="4.60 A"/>
    <property type="chains" value="o=1-124"/>
</dbReference>
<dbReference type="PDB" id="4A2I">
    <property type="method" value="EM"/>
    <property type="resolution" value="16.50 A"/>
    <property type="chains" value="L=2-124"/>
</dbReference>
<dbReference type="PDB" id="4ADV">
    <property type="method" value="EM"/>
    <property type="resolution" value="13.50 A"/>
    <property type="chains" value="L=2-124"/>
</dbReference>
<dbReference type="PDB" id="4U1U">
    <property type="method" value="X-ray"/>
    <property type="resolution" value="2.95 A"/>
    <property type="chains" value="AL/CL=2-124"/>
</dbReference>
<dbReference type="PDB" id="4U1V">
    <property type="method" value="X-ray"/>
    <property type="resolution" value="3.00 A"/>
    <property type="chains" value="AL/CL=2-124"/>
</dbReference>
<dbReference type="PDB" id="4U20">
    <property type="method" value="X-ray"/>
    <property type="resolution" value="2.90 A"/>
    <property type="chains" value="AL/CL=2-124"/>
</dbReference>
<dbReference type="PDB" id="4U24">
    <property type="method" value="X-ray"/>
    <property type="resolution" value="2.90 A"/>
    <property type="chains" value="AL/CL=2-124"/>
</dbReference>
<dbReference type="PDB" id="4U25">
    <property type="method" value="X-ray"/>
    <property type="resolution" value="2.90 A"/>
    <property type="chains" value="AL/CL=2-124"/>
</dbReference>
<dbReference type="PDB" id="4U26">
    <property type="method" value="X-ray"/>
    <property type="resolution" value="2.80 A"/>
    <property type="chains" value="AL/CL=2-124"/>
</dbReference>
<dbReference type="PDB" id="4U27">
    <property type="method" value="X-ray"/>
    <property type="resolution" value="2.80 A"/>
    <property type="chains" value="AL/CL=2-124"/>
</dbReference>
<dbReference type="PDB" id="4V47">
    <property type="method" value="EM"/>
    <property type="resolution" value="12.30 A"/>
    <property type="chains" value="BL=2-124"/>
</dbReference>
<dbReference type="PDB" id="4V48">
    <property type="method" value="EM"/>
    <property type="resolution" value="11.50 A"/>
    <property type="chains" value="BL=2-124"/>
</dbReference>
<dbReference type="PDB" id="4V4H">
    <property type="method" value="X-ray"/>
    <property type="resolution" value="3.46 A"/>
    <property type="chains" value="AL/CL=1-124"/>
</dbReference>
<dbReference type="PDB" id="4V4Q">
    <property type="method" value="X-ray"/>
    <property type="resolution" value="3.46 A"/>
    <property type="chains" value="AL/CL=2-124"/>
</dbReference>
<dbReference type="PDB" id="4V4V">
    <property type="method" value="EM"/>
    <property type="resolution" value="15.00 A"/>
    <property type="chains" value="AL=23-123"/>
</dbReference>
<dbReference type="PDB" id="4V4W">
    <property type="method" value="EM"/>
    <property type="resolution" value="15.00 A"/>
    <property type="chains" value="AL=23-123"/>
</dbReference>
<dbReference type="PDB" id="4V50">
    <property type="method" value="X-ray"/>
    <property type="resolution" value="3.22 A"/>
    <property type="chains" value="AL/CL=2-124"/>
</dbReference>
<dbReference type="PDB" id="4V52">
    <property type="method" value="X-ray"/>
    <property type="resolution" value="3.21 A"/>
    <property type="chains" value="AL/CL=2-124"/>
</dbReference>
<dbReference type="PDB" id="4V53">
    <property type="method" value="X-ray"/>
    <property type="resolution" value="3.54 A"/>
    <property type="chains" value="AL/CL=2-124"/>
</dbReference>
<dbReference type="PDB" id="4V54">
    <property type="method" value="X-ray"/>
    <property type="resolution" value="3.30 A"/>
    <property type="chains" value="AL/CL=2-124"/>
</dbReference>
<dbReference type="PDB" id="4V55">
    <property type="method" value="X-ray"/>
    <property type="resolution" value="4.00 A"/>
    <property type="chains" value="AL/CL=2-124"/>
</dbReference>
<dbReference type="PDB" id="4V56">
    <property type="method" value="X-ray"/>
    <property type="resolution" value="3.93 A"/>
    <property type="chains" value="AL/CL=2-124"/>
</dbReference>
<dbReference type="PDB" id="4V57">
    <property type="method" value="X-ray"/>
    <property type="resolution" value="3.50 A"/>
    <property type="chains" value="AL/CL=2-124"/>
</dbReference>
<dbReference type="PDB" id="4V5B">
    <property type="method" value="X-ray"/>
    <property type="resolution" value="3.74 A"/>
    <property type="chains" value="BL/DL=2-124"/>
</dbReference>
<dbReference type="PDB" id="4V5H">
    <property type="method" value="EM"/>
    <property type="resolution" value="5.80 A"/>
    <property type="chains" value="AL=2-124"/>
</dbReference>
<dbReference type="PDB" id="4V5Y">
    <property type="method" value="X-ray"/>
    <property type="resolution" value="4.45 A"/>
    <property type="chains" value="AL/CL=2-124"/>
</dbReference>
<dbReference type="PDB" id="4V64">
    <property type="method" value="X-ray"/>
    <property type="resolution" value="3.50 A"/>
    <property type="chains" value="AL/CL=2-124"/>
</dbReference>
<dbReference type="PDB" id="4V65">
    <property type="method" value="EM"/>
    <property type="resolution" value="9.00 A"/>
    <property type="chains" value="AD=1-124"/>
</dbReference>
<dbReference type="PDB" id="4V66">
    <property type="method" value="EM"/>
    <property type="resolution" value="9.00 A"/>
    <property type="chains" value="AD=1-124"/>
</dbReference>
<dbReference type="PDB" id="4V69">
    <property type="method" value="EM"/>
    <property type="resolution" value="6.70 A"/>
    <property type="chains" value="AL=2-124"/>
</dbReference>
<dbReference type="PDB" id="4V6C">
    <property type="method" value="X-ray"/>
    <property type="resolution" value="3.19 A"/>
    <property type="chains" value="AL/CL=1-124"/>
</dbReference>
<dbReference type="PDB" id="4V6D">
    <property type="method" value="X-ray"/>
    <property type="resolution" value="3.81 A"/>
    <property type="chains" value="AL/CL=1-124"/>
</dbReference>
<dbReference type="PDB" id="4V6E">
    <property type="method" value="X-ray"/>
    <property type="resolution" value="3.71 A"/>
    <property type="chains" value="AL/CL=1-124"/>
</dbReference>
<dbReference type="PDB" id="4V6K">
    <property type="method" value="EM"/>
    <property type="resolution" value="8.25 A"/>
    <property type="chains" value="BP=1-124"/>
</dbReference>
<dbReference type="PDB" id="4V6L">
    <property type="method" value="EM"/>
    <property type="resolution" value="13.20 A"/>
    <property type="chains" value="AP=1-124"/>
</dbReference>
<dbReference type="PDB" id="4V6M">
    <property type="method" value="EM"/>
    <property type="resolution" value="7.10 A"/>
    <property type="chains" value="AL=2-124, AO=2-89"/>
</dbReference>
<dbReference type="PDB" id="4V6N">
    <property type="method" value="EM"/>
    <property type="resolution" value="12.10 A"/>
    <property type="chains" value="BO=2-124"/>
</dbReference>
<dbReference type="PDB" id="4V6O">
    <property type="method" value="EM"/>
    <property type="resolution" value="14.70 A"/>
    <property type="chains" value="AO=2-124"/>
</dbReference>
<dbReference type="PDB" id="4V6P">
    <property type="method" value="EM"/>
    <property type="resolution" value="13.50 A"/>
    <property type="chains" value="AO=2-124"/>
</dbReference>
<dbReference type="PDB" id="4V6Q">
    <property type="method" value="EM"/>
    <property type="resolution" value="11.50 A"/>
    <property type="chains" value="AO=2-124"/>
</dbReference>
<dbReference type="PDB" id="4V6R">
    <property type="method" value="EM"/>
    <property type="resolution" value="11.50 A"/>
    <property type="chains" value="AO=2-124"/>
</dbReference>
<dbReference type="PDB" id="4V6S">
    <property type="method" value="EM"/>
    <property type="resolution" value="13.10 A"/>
    <property type="chains" value="BN=2-124"/>
</dbReference>
<dbReference type="PDB" id="4V6T">
    <property type="method" value="EM"/>
    <property type="resolution" value="8.30 A"/>
    <property type="chains" value="AL=2-124"/>
</dbReference>
<dbReference type="PDB" id="4V6V">
    <property type="method" value="EM"/>
    <property type="resolution" value="9.80 A"/>
    <property type="chains" value="AL=2-124"/>
</dbReference>
<dbReference type="PDB" id="4V6Y">
    <property type="method" value="EM"/>
    <property type="resolution" value="12.00 A"/>
    <property type="chains" value="AL=1-124"/>
</dbReference>
<dbReference type="PDB" id="4V6Z">
    <property type="method" value="EM"/>
    <property type="resolution" value="12.00 A"/>
    <property type="chains" value="AL=1-124"/>
</dbReference>
<dbReference type="PDB" id="4V70">
    <property type="method" value="EM"/>
    <property type="resolution" value="17.00 A"/>
    <property type="chains" value="AL=1-124"/>
</dbReference>
<dbReference type="PDB" id="4V71">
    <property type="method" value="EM"/>
    <property type="resolution" value="20.00 A"/>
    <property type="chains" value="AL=1-124"/>
</dbReference>
<dbReference type="PDB" id="4V72">
    <property type="method" value="EM"/>
    <property type="resolution" value="13.00 A"/>
    <property type="chains" value="AL=1-124"/>
</dbReference>
<dbReference type="PDB" id="4V73">
    <property type="method" value="EM"/>
    <property type="resolution" value="15.00 A"/>
    <property type="chains" value="AL=1-124"/>
</dbReference>
<dbReference type="PDB" id="4V74">
    <property type="method" value="EM"/>
    <property type="resolution" value="17.00 A"/>
    <property type="chains" value="AL=1-124"/>
</dbReference>
<dbReference type="PDB" id="4V75">
    <property type="method" value="EM"/>
    <property type="resolution" value="12.00 A"/>
    <property type="chains" value="AL=1-124"/>
</dbReference>
<dbReference type="PDB" id="4V76">
    <property type="method" value="EM"/>
    <property type="resolution" value="17.00 A"/>
    <property type="chains" value="AL=1-124"/>
</dbReference>
<dbReference type="PDB" id="4V77">
    <property type="method" value="EM"/>
    <property type="resolution" value="17.00 A"/>
    <property type="chains" value="AL=1-124"/>
</dbReference>
<dbReference type="PDB" id="4V78">
    <property type="method" value="EM"/>
    <property type="resolution" value="20.00 A"/>
    <property type="chains" value="AL=1-124"/>
</dbReference>
<dbReference type="PDB" id="4V79">
    <property type="method" value="EM"/>
    <property type="resolution" value="15.00 A"/>
    <property type="chains" value="AL=1-124"/>
</dbReference>
<dbReference type="PDB" id="4V7A">
    <property type="method" value="EM"/>
    <property type="resolution" value="9.00 A"/>
    <property type="chains" value="AL=1-124"/>
</dbReference>
<dbReference type="PDB" id="4V7B">
    <property type="method" value="EM"/>
    <property type="resolution" value="6.80 A"/>
    <property type="chains" value="AL=1-124"/>
</dbReference>
<dbReference type="PDB" id="4V7C">
    <property type="method" value="EM"/>
    <property type="resolution" value="7.60 A"/>
    <property type="chains" value="AL=2-124"/>
</dbReference>
<dbReference type="PDB" id="4V7D">
    <property type="method" value="EM"/>
    <property type="resolution" value="7.60 A"/>
    <property type="chains" value="BL=2-124"/>
</dbReference>
<dbReference type="PDB" id="4V7I">
    <property type="method" value="EM"/>
    <property type="resolution" value="9.60 A"/>
    <property type="chains" value="BL=1-124"/>
</dbReference>
<dbReference type="PDB" id="4V7S">
    <property type="method" value="X-ray"/>
    <property type="resolution" value="3.25 A"/>
    <property type="chains" value="AL/CL=2-124"/>
</dbReference>
<dbReference type="PDB" id="4V7T">
    <property type="method" value="X-ray"/>
    <property type="resolution" value="3.19 A"/>
    <property type="chains" value="AL/CL=2-124"/>
</dbReference>
<dbReference type="PDB" id="4V7U">
    <property type="method" value="X-ray"/>
    <property type="resolution" value="3.10 A"/>
    <property type="chains" value="AL/CL=2-124"/>
</dbReference>
<dbReference type="PDB" id="4V7V">
    <property type="method" value="X-ray"/>
    <property type="resolution" value="3.29 A"/>
    <property type="chains" value="AL/CL=2-124"/>
</dbReference>
<dbReference type="PDB" id="4V85">
    <property type="method" value="X-ray"/>
    <property type="resolution" value="3.20 A"/>
    <property type="chains" value="AL=1-124"/>
</dbReference>
<dbReference type="PDB" id="4V89">
    <property type="method" value="X-ray"/>
    <property type="resolution" value="3.70 A"/>
    <property type="chains" value="AL=1-124"/>
</dbReference>
<dbReference type="PDB" id="4V9C">
    <property type="method" value="X-ray"/>
    <property type="resolution" value="3.30 A"/>
    <property type="chains" value="AL/CL=1-124"/>
</dbReference>
<dbReference type="PDB" id="4V9D">
    <property type="method" value="X-ray"/>
    <property type="resolution" value="3.00 A"/>
    <property type="chains" value="AL/BL=2-124"/>
</dbReference>
<dbReference type="PDB" id="4V9O">
    <property type="method" value="X-ray"/>
    <property type="resolution" value="2.90 A"/>
    <property type="chains" value="BL/DL/FL/HL=1-124"/>
</dbReference>
<dbReference type="PDB" id="4V9P">
    <property type="method" value="X-ray"/>
    <property type="resolution" value="2.90 A"/>
    <property type="chains" value="BL/DL/FL/HL=1-124"/>
</dbReference>
<dbReference type="PDB" id="4WF1">
    <property type="method" value="X-ray"/>
    <property type="resolution" value="3.09 A"/>
    <property type="chains" value="AL/CL=2-124"/>
</dbReference>
<dbReference type="PDB" id="4WOI">
    <property type="method" value="X-ray"/>
    <property type="resolution" value="3.00 A"/>
    <property type="chains" value="AL/DL=1-124"/>
</dbReference>
<dbReference type="PDB" id="4WWW">
    <property type="method" value="X-ray"/>
    <property type="resolution" value="3.10 A"/>
    <property type="chains" value="QL/XL=2-124"/>
</dbReference>
<dbReference type="PDB" id="4YBB">
    <property type="method" value="X-ray"/>
    <property type="resolution" value="2.10 A"/>
    <property type="chains" value="AL/BL=2-124"/>
</dbReference>
<dbReference type="PDB" id="5AFI">
    <property type="method" value="EM"/>
    <property type="resolution" value="2.90 A"/>
    <property type="chains" value="l=1-124"/>
</dbReference>
<dbReference type="PDB" id="5H5U">
    <property type="method" value="EM"/>
    <property type="resolution" value="3.00 A"/>
    <property type="chains" value="s=2-124"/>
</dbReference>
<dbReference type="PDB" id="5IQR">
    <property type="method" value="EM"/>
    <property type="resolution" value="3.00 A"/>
    <property type="chains" value="q=1-124"/>
</dbReference>
<dbReference type="PDB" id="5IT8">
    <property type="method" value="X-ray"/>
    <property type="resolution" value="3.12 A"/>
    <property type="chains" value="AL/BL=2-124"/>
</dbReference>
<dbReference type="PDB" id="5J5B">
    <property type="method" value="X-ray"/>
    <property type="resolution" value="2.80 A"/>
    <property type="chains" value="AL/BL=2-124"/>
</dbReference>
<dbReference type="PDB" id="5J7L">
    <property type="method" value="X-ray"/>
    <property type="resolution" value="3.00 A"/>
    <property type="chains" value="AL/BL=2-124"/>
</dbReference>
<dbReference type="PDB" id="5J88">
    <property type="method" value="X-ray"/>
    <property type="resolution" value="3.32 A"/>
    <property type="chains" value="AL/BL=2-124"/>
</dbReference>
<dbReference type="PDB" id="5J8A">
    <property type="method" value="X-ray"/>
    <property type="resolution" value="3.10 A"/>
    <property type="chains" value="AL/BL=2-124"/>
</dbReference>
<dbReference type="PDB" id="5J91">
    <property type="method" value="X-ray"/>
    <property type="resolution" value="2.96 A"/>
    <property type="chains" value="AL/BL=2-124"/>
</dbReference>
<dbReference type="PDB" id="5JC9">
    <property type="method" value="X-ray"/>
    <property type="resolution" value="3.03 A"/>
    <property type="chains" value="AL/BL=2-124"/>
</dbReference>
<dbReference type="PDB" id="5JTE">
    <property type="method" value="EM"/>
    <property type="resolution" value="3.60 A"/>
    <property type="chains" value="AL=1-124"/>
</dbReference>
<dbReference type="PDB" id="5JU8">
    <property type="method" value="EM"/>
    <property type="resolution" value="3.60 A"/>
    <property type="chains" value="AL=1-124"/>
</dbReference>
<dbReference type="PDB" id="5KCR">
    <property type="method" value="EM"/>
    <property type="resolution" value="3.60 A"/>
    <property type="chains" value="1l=1-124"/>
</dbReference>
<dbReference type="PDB" id="5KCS">
    <property type="method" value="EM"/>
    <property type="resolution" value="3.90 A"/>
    <property type="chains" value="1l=1-124"/>
</dbReference>
<dbReference type="PDB" id="5KPS">
    <property type="method" value="EM"/>
    <property type="resolution" value="3.90 A"/>
    <property type="chains" value="17=1-124"/>
</dbReference>
<dbReference type="PDB" id="5KPV">
    <property type="method" value="EM"/>
    <property type="resolution" value="4.10 A"/>
    <property type="chains" value="16=1-124"/>
</dbReference>
<dbReference type="PDB" id="5KPW">
    <property type="method" value="EM"/>
    <property type="resolution" value="3.90 A"/>
    <property type="chains" value="16=1-124"/>
</dbReference>
<dbReference type="PDB" id="5KPX">
    <property type="method" value="EM"/>
    <property type="resolution" value="3.90 A"/>
    <property type="chains" value="16=1-124"/>
</dbReference>
<dbReference type="PDB" id="5L3P">
    <property type="method" value="EM"/>
    <property type="resolution" value="3.70 A"/>
    <property type="chains" value="l=1-124"/>
</dbReference>
<dbReference type="PDB" id="5LZA">
    <property type="method" value="EM"/>
    <property type="resolution" value="3.60 A"/>
    <property type="chains" value="l=2-124"/>
</dbReference>
<dbReference type="PDB" id="5LZB">
    <property type="method" value="EM"/>
    <property type="resolution" value="5.30 A"/>
    <property type="chains" value="l=2-124"/>
</dbReference>
<dbReference type="PDB" id="5LZC">
    <property type="method" value="EM"/>
    <property type="resolution" value="4.80 A"/>
    <property type="chains" value="l=2-124"/>
</dbReference>
<dbReference type="PDB" id="5LZD">
    <property type="method" value="EM"/>
    <property type="resolution" value="3.40 A"/>
    <property type="chains" value="l=2-124"/>
</dbReference>
<dbReference type="PDB" id="5LZE">
    <property type="method" value="EM"/>
    <property type="resolution" value="3.50 A"/>
    <property type="chains" value="l=2-124"/>
</dbReference>
<dbReference type="PDB" id="5LZF">
    <property type="method" value="EM"/>
    <property type="resolution" value="4.60 A"/>
    <property type="chains" value="l=2-124"/>
</dbReference>
<dbReference type="PDB" id="5MDV">
    <property type="method" value="EM"/>
    <property type="resolution" value="2.97 A"/>
    <property type="chains" value="q=1-124"/>
</dbReference>
<dbReference type="PDB" id="5MDW">
    <property type="method" value="EM"/>
    <property type="resolution" value="3.06 A"/>
    <property type="chains" value="q=1-124"/>
</dbReference>
<dbReference type="PDB" id="5MDY">
    <property type="method" value="EM"/>
    <property type="resolution" value="3.35 A"/>
    <property type="chains" value="q=1-124"/>
</dbReference>
<dbReference type="PDB" id="5MDZ">
    <property type="method" value="EM"/>
    <property type="resolution" value="3.10 A"/>
    <property type="chains" value="q=1-124"/>
</dbReference>
<dbReference type="PDB" id="5ME0">
    <property type="method" value="EM"/>
    <property type="resolution" value="13.50 A"/>
    <property type="chains" value="L=2-124"/>
</dbReference>
<dbReference type="PDB" id="5ME1">
    <property type="method" value="EM"/>
    <property type="resolution" value="13.50 A"/>
    <property type="chains" value="L=2-124"/>
</dbReference>
<dbReference type="PDB" id="5MGP">
    <property type="method" value="EM"/>
    <property type="resolution" value="3.10 A"/>
    <property type="chains" value="l=2-124"/>
</dbReference>
<dbReference type="PDB" id="5MY1">
    <property type="method" value="EM"/>
    <property type="resolution" value="7.60 A"/>
    <property type="chains" value="L=2-124"/>
</dbReference>
<dbReference type="PDB" id="5NO2">
    <property type="method" value="EM"/>
    <property type="resolution" value="5.16 A"/>
    <property type="chains" value="L=2-15"/>
</dbReference>
<dbReference type="PDB" id="5NO3">
    <property type="method" value="EM"/>
    <property type="resolution" value="5.16 A"/>
    <property type="chains" value="L=2-15"/>
</dbReference>
<dbReference type="PDB" id="5NO4">
    <property type="method" value="EM"/>
    <property type="resolution" value="5.16 A"/>
    <property type="chains" value="L=2-15"/>
</dbReference>
<dbReference type="PDB" id="5NP6">
    <property type="method" value="EM"/>
    <property type="resolution" value="3.60 A"/>
    <property type="chains" value="O=2-124"/>
</dbReference>
<dbReference type="PDB" id="5NWY">
    <property type="method" value="EM"/>
    <property type="resolution" value="2.93 A"/>
    <property type="chains" value="B=1-124"/>
</dbReference>
<dbReference type="PDB" id="5O2R">
    <property type="method" value="EM"/>
    <property type="resolution" value="3.40 A"/>
    <property type="chains" value="l=2-124"/>
</dbReference>
<dbReference type="PDB" id="5U4I">
    <property type="method" value="EM"/>
    <property type="resolution" value="3.50 A"/>
    <property type="chains" value="l=2-124"/>
</dbReference>
<dbReference type="PDB" id="5U4J">
    <property type="method" value="EM"/>
    <property type="resolution" value="3.70 A"/>
    <property type="chains" value="l=1-124"/>
</dbReference>
<dbReference type="PDB" id="5U9F">
    <property type="method" value="EM"/>
    <property type="resolution" value="3.20 A"/>
    <property type="chains" value="L=1-124"/>
</dbReference>
<dbReference type="PDB" id="5U9G">
    <property type="method" value="EM"/>
    <property type="resolution" value="3.20 A"/>
    <property type="chains" value="L=1-124"/>
</dbReference>
<dbReference type="PDB" id="5UYK">
    <property type="method" value="EM"/>
    <property type="resolution" value="3.90 A"/>
    <property type="chains" value="L=2-124"/>
</dbReference>
<dbReference type="PDB" id="5UYL">
    <property type="method" value="EM"/>
    <property type="resolution" value="3.60 A"/>
    <property type="chains" value="L=2-124"/>
</dbReference>
<dbReference type="PDB" id="5UYM">
    <property type="method" value="EM"/>
    <property type="resolution" value="3.20 A"/>
    <property type="chains" value="L=2-124"/>
</dbReference>
<dbReference type="PDB" id="5UYN">
    <property type="method" value="EM"/>
    <property type="resolution" value="4.00 A"/>
    <property type="chains" value="L=2-124"/>
</dbReference>
<dbReference type="PDB" id="5UYP">
    <property type="method" value="EM"/>
    <property type="resolution" value="3.90 A"/>
    <property type="chains" value="L=2-124"/>
</dbReference>
<dbReference type="PDB" id="5UYQ">
    <property type="method" value="EM"/>
    <property type="resolution" value="3.80 A"/>
    <property type="chains" value="L=2-124"/>
</dbReference>
<dbReference type="PDB" id="5UZ4">
    <property type="method" value="EM"/>
    <property type="resolution" value="5.80 A"/>
    <property type="chains" value="L=1-124"/>
</dbReference>
<dbReference type="PDB" id="5WDT">
    <property type="method" value="EM"/>
    <property type="resolution" value="3.00 A"/>
    <property type="chains" value="l=2-122"/>
</dbReference>
<dbReference type="PDB" id="5WE4">
    <property type="method" value="EM"/>
    <property type="resolution" value="3.10 A"/>
    <property type="chains" value="l=2-122"/>
</dbReference>
<dbReference type="PDB" id="5WE6">
    <property type="method" value="EM"/>
    <property type="resolution" value="3.40 A"/>
    <property type="chains" value="l=2-122"/>
</dbReference>
<dbReference type="PDB" id="5WF0">
    <property type="method" value="EM"/>
    <property type="resolution" value="3.60 A"/>
    <property type="chains" value="l=2-122"/>
</dbReference>
<dbReference type="PDB" id="5WFK">
    <property type="method" value="EM"/>
    <property type="resolution" value="3.40 A"/>
    <property type="chains" value="l=2-122"/>
</dbReference>
<dbReference type="PDB" id="5WFS">
    <property type="method" value="EM"/>
    <property type="resolution" value="3.00 A"/>
    <property type="chains" value="l=2-122"/>
</dbReference>
<dbReference type="PDB" id="6AWB">
    <property type="method" value="EM"/>
    <property type="resolution" value="6.70 A"/>
    <property type="chains" value="O=2-124"/>
</dbReference>
<dbReference type="PDB" id="6AWC">
    <property type="method" value="EM"/>
    <property type="resolution" value="7.90 A"/>
    <property type="chains" value="O=2-124"/>
</dbReference>
<dbReference type="PDB" id="6AWD">
    <property type="method" value="EM"/>
    <property type="resolution" value="8.10 A"/>
    <property type="chains" value="O=2-124"/>
</dbReference>
<dbReference type="PDB" id="6BU8">
    <property type="method" value="EM"/>
    <property type="resolution" value="3.50 A"/>
    <property type="chains" value="L=2-124"/>
</dbReference>
<dbReference type="PDB" id="6BY1">
    <property type="method" value="X-ray"/>
    <property type="resolution" value="3.94 A"/>
    <property type="chains" value="AL/BL=2-124"/>
</dbReference>
<dbReference type="PDB" id="6C4I">
    <property type="method" value="EM"/>
    <property type="resolution" value="3.24 A"/>
    <property type="chains" value="l=1-124"/>
</dbReference>
<dbReference type="PDB" id="6DNC">
    <property type="method" value="EM"/>
    <property type="resolution" value="3.70 A"/>
    <property type="chains" value="YA=1-124"/>
</dbReference>
<dbReference type="PDB" id="6ENF">
    <property type="method" value="EM"/>
    <property type="resolution" value="3.20 A"/>
    <property type="chains" value="l=2-124"/>
</dbReference>
<dbReference type="PDB" id="6ENJ">
    <property type="method" value="EM"/>
    <property type="resolution" value="3.70 A"/>
    <property type="chains" value="l=2-124"/>
</dbReference>
<dbReference type="PDB" id="6ENU">
    <property type="method" value="EM"/>
    <property type="resolution" value="3.10 A"/>
    <property type="chains" value="l=2-124"/>
</dbReference>
<dbReference type="PDB" id="6GWT">
    <property type="method" value="EM"/>
    <property type="resolution" value="3.80 A"/>
    <property type="chains" value="l=2-124"/>
</dbReference>
<dbReference type="PDB" id="6GXM">
    <property type="method" value="EM"/>
    <property type="resolution" value="3.80 A"/>
    <property type="chains" value="l=2-124"/>
</dbReference>
<dbReference type="PDB" id="6GXN">
    <property type="method" value="EM"/>
    <property type="resolution" value="3.90 A"/>
    <property type="chains" value="l=2-124"/>
</dbReference>
<dbReference type="PDB" id="6GXO">
    <property type="method" value="EM"/>
    <property type="resolution" value="3.90 A"/>
    <property type="chains" value="l=2-124"/>
</dbReference>
<dbReference type="PDB" id="6GXP">
    <property type="method" value="EM"/>
    <property type="resolution" value="4.40 A"/>
    <property type="chains" value="l=2-124"/>
</dbReference>
<dbReference type="PDB" id="6H4N">
    <property type="method" value="EM"/>
    <property type="resolution" value="3.00 A"/>
    <property type="chains" value="l=2-124"/>
</dbReference>
<dbReference type="PDB" id="6H58">
    <property type="method" value="EM"/>
    <property type="resolution" value="7.90 A"/>
    <property type="chains" value="l/ll=2-124"/>
</dbReference>
<dbReference type="PDB" id="6HRM">
    <property type="method" value="EM"/>
    <property type="resolution" value="2.96 A"/>
    <property type="chains" value="q=2-124"/>
</dbReference>
<dbReference type="PDB" id="6I7V">
    <property type="method" value="X-ray"/>
    <property type="resolution" value="2.90 A"/>
    <property type="chains" value="AL/BL=2-124"/>
</dbReference>
<dbReference type="PDB" id="6O7K">
    <property type="method" value="EM"/>
    <property type="resolution" value="4.20 A"/>
    <property type="chains" value="t=2-124"/>
</dbReference>
<dbReference type="PDB" id="6O9J">
    <property type="method" value="EM"/>
    <property type="resolution" value="3.90 A"/>
    <property type="chains" value="l=2-124"/>
</dbReference>
<dbReference type="PDB" id="6O9K">
    <property type="method" value="EM"/>
    <property type="resolution" value="4.00 A"/>
    <property type="chains" value="l=2-124"/>
</dbReference>
<dbReference type="PDB" id="6OFX">
    <property type="method" value="EM"/>
    <property type="resolution" value="3.30 A"/>
    <property type="chains" value="Q=2-124"/>
</dbReference>
<dbReference type="PDB" id="6OG7">
    <property type="method" value="EM"/>
    <property type="resolution" value="3.30 A"/>
    <property type="chains" value="Q=2-124"/>
</dbReference>
<dbReference type="PDB" id="6OGF">
    <property type="method" value="EM"/>
    <property type="resolution" value="3.90 A"/>
    <property type="chains" value="Q=1-124"/>
</dbReference>
<dbReference type="PDB" id="6OGG">
    <property type="method" value="EM"/>
    <property type="resolution" value="4.20 A"/>
    <property type="chains" value="Q=1-124"/>
</dbReference>
<dbReference type="PDB" id="6OGI">
    <property type="method" value="EM"/>
    <property type="resolution" value="3.40 A"/>
    <property type="chains" value="Q=1-124"/>
</dbReference>
<dbReference type="PDB" id="6OM6">
    <property type="method" value="EM"/>
    <property type="resolution" value="3.10 A"/>
    <property type="chains" value="q=1-124"/>
</dbReference>
<dbReference type="PDB" id="6ORE">
    <property type="method" value="EM"/>
    <property type="resolution" value="2.90 A"/>
    <property type="chains" value="q=2-124"/>
</dbReference>
<dbReference type="PDB" id="6ORL">
    <property type="method" value="EM"/>
    <property type="resolution" value="3.50 A"/>
    <property type="chains" value="q=2-124"/>
</dbReference>
<dbReference type="PDB" id="6OSK">
    <property type="method" value="EM"/>
    <property type="resolution" value="3.60 A"/>
    <property type="chains" value="q=2-124"/>
</dbReference>
<dbReference type="PDB" id="6OSQ">
    <property type="method" value="EM"/>
    <property type="resolution" value="3.50 A"/>
    <property type="chains" value="q=2-124"/>
</dbReference>
<dbReference type="PDB" id="6OST">
    <property type="method" value="EM"/>
    <property type="resolution" value="4.20 A"/>
    <property type="chains" value="q=2-124"/>
</dbReference>
<dbReference type="PDB" id="6OT3">
    <property type="method" value="EM"/>
    <property type="resolution" value="3.90 A"/>
    <property type="chains" value="q=2-88"/>
</dbReference>
<dbReference type="PDB" id="6OUO">
    <property type="method" value="EM"/>
    <property type="resolution" value="3.70 A"/>
    <property type="chains" value="q=2-88"/>
</dbReference>
<dbReference type="PDB" id="6Q9A">
    <property type="method" value="EM"/>
    <property type="resolution" value="3.70 A"/>
    <property type="chains" value="q=2-123"/>
</dbReference>
<dbReference type="PDB" id="6SZS">
    <property type="method" value="EM"/>
    <property type="resolution" value="3.06 A"/>
    <property type="chains" value="l=1-124"/>
</dbReference>
<dbReference type="PDB" id="6TBV">
    <property type="method" value="EM"/>
    <property type="resolution" value="2.70 A"/>
    <property type="chains" value="S121=1-124"/>
</dbReference>
<dbReference type="PDB" id="6TC3">
    <property type="method" value="EM"/>
    <property type="resolution" value="2.70 A"/>
    <property type="chains" value="S121=1-124"/>
</dbReference>
<dbReference type="PDB" id="6VU3">
    <property type="method" value="EM"/>
    <property type="resolution" value="3.70 A"/>
    <property type="chains" value="R=1-124"/>
</dbReference>
<dbReference type="PDB" id="6VWL">
    <property type="method" value="EM"/>
    <property type="resolution" value="3.10 A"/>
    <property type="chains" value="k=1-124"/>
</dbReference>
<dbReference type="PDB" id="6VWM">
    <property type="method" value="EM"/>
    <property type="resolution" value="3.40 A"/>
    <property type="chains" value="k=1-124"/>
</dbReference>
<dbReference type="PDB" id="6VWN">
    <property type="method" value="EM"/>
    <property type="resolution" value="3.40 A"/>
    <property type="chains" value="k=1-124"/>
</dbReference>
<dbReference type="PDB" id="6VYQ">
    <property type="method" value="EM"/>
    <property type="resolution" value="3.70 A"/>
    <property type="chains" value="R=1-124"/>
</dbReference>
<dbReference type="PDB" id="6VYR">
    <property type="method" value="EM"/>
    <property type="resolution" value="3.80 A"/>
    <property type="chains" value="R=1-124"/>
</dbReference>
<dbReference type="PDB" id="6VYS">
    <property type="method" value="EM"/>
    <property type="resolution" value="3.70 A"/>
    <property type="chains" value="R=1-124"/>
</dbReference>
<dbReference type="PDB" id="6VYT">
    <property type="method" value="EM"/>
    <property type="resolution" value="14.00 A"/>
    <property type="chains" value="R=1-124"/>
</dbReference>
<dbReference type="PDB" id="6VYU">
    <property type="method" value="EM"/>
    <property type="resolution" value="7.00 A"/>
    <property type="chains" value="R=1-124"/>
</dbReference>
<dbReference type="PDB" id="6VYW">
    <property type="method" value="EM"/>
    <property type="resolution" value="7.00 A"/>
    <property type="chains" value="R=1-124"/>
</dbReference>
<dbReference type="PDB" id="6VYX">
    <property type="method" value="EM"/>
    <property type="resolution" value="9.90 A"/>
    <property type="chains" value="R=1-124"/>
</dbReference>
<dbReference type="PDB" id="6VYY">
    <property type="method" value="EM"/>
    <property type="resolution" value="9.90 A"/>
    <property type="chains" value="R=1-124"/>
</dbReference>
<dbReference type="PDB" id="6VYZ">
    <property type="method" value="EM"/>
    <property type="resolution" value="9.90 A"/>
    <property type="chains" value="R=1-124"/>
</dbReference>
<dbReference type="PDB" id="6VZ2">
    <property type="method" value="EM"/>
    <property type="resolution" value="10.00 A"/>
    <property type="chains" value="R=1-124"/>
</dbReference>
<dbReference type="PDB" id="6VZ3">
    <property type="method" value="EM"/>
    <property type="resolution" value="8.90 A"/>
    <property type="chains" value="R=2-124"/>
</dbReference>
<dbReference type="PDB" id="6VZ5">
    <property type="method" value="EM"/>
    <property type="resolution" value="8.90 A"/>
    <property type="chains" value="R=1-124"/>
</dbReference>
<dbReference type="PDB" id="6VZ7">
    <property type="method" value="EM"/>
    <property type="resolution" value="7.00 A"/>
    <property type="chains" value="R=2-124"/>
</dbReference>
<dbReference type="PDB" id="6VZJ">
    <property type="method" value="EM"/>
    <property type="resolution" value="4.10 A"/>
    <property type="chains" value="R=2-124"/>
</dbReference>
<dbReference type="PDB" id="6W6K">
    <property type="method" value="EM"/>
    <property type="resolution" value="3.60 A"/>
    <property type="chains" value="L=1-124"/>
</dbReference>
<dbReference type="PDB" id="6W77">
    <property type="method" value="EM"/>
    <property type="resolution" value="3.60 A"/>
    <property type="chains" value="L=1-124"/>
</dbReference>
<dbReference type="PDB" id="6W7M">
    <property type="method" value="EM"/>
    <property type="resolution" value="3.80 A"/>
    <property type="chains" value="L=1-124"/>
</dbReference>
<dbReference type="PDB" id="6W7N">
    <property type="method" value="EM"/>
    <property type="resolution" value="3.40 A"/>
    <property type="chains" value="L=1-124"/>
</dbReference>
<dbReference type="PDB" id="6W7W">
    <property type="method" value="EM"/>
    <property type="resolution" value="3.90 A"/>
    <property type="chains" value="K=1-124"/>
</dbReference>
<dbReference type="PDB" id="6WD0">
    <property type="method" value="EM"/>
    <property type="resolution" value="3.00 A"/>
    <property type="chains" value="Q=2-124"/>
</dbReference>
<dbReference type="PDB" id="6WD1">
    <property type="method" value="EM"/>
    <property type="resolution" value="3.30 A"/>
    <property type="chains" value="Q=2-124"/>
</dbReference>
<dbReference type="PDB" id="6WD2">
    <property type="method" value="EM"/>
    <property type="resolution" value="3.60 A"/>
    <property type="chains" value="Q=2-124"/>
</dbReference>
<dbReference type="PDB" id="6WD3">
    <property type="method" value="EM"/>
    <property type="resolution" value="3.60 A"/>
    <property type="chains" value="Q=2-124"/>
</dbReference>
<dbReference type="PDB" id="6WD4">
    <property type="method" value="EM"/>
    <property type="resolution" value="3.70 A"/>
    <property type="chains" value="Q=2-124"/>
</dbReference>
<dbReference type="PDB" id="6WD5">
    <property type="method" value="EM"/>
    <property type="resolution" value="3.60 A"/>
    <property type="chains" value="Q=2-124"/>
</dbReference>
<dbReference type="PDB" id="6WD6">
    <property type="method" value="EM"/>
    <property type="resolution" value="3.70 A"/>
    <property type="chains" value="Q=2-124"/>
</dbReference>
<dbReference type="PDB" id="6WD7">
    <property type="method" value="EM"/>
    <property type="resolution" value="3.90 A"/>
    <property type="chains" value="Q=2-124"/>
</dbReference>
<dbReference type="PDB" id="6WD8">
    <property type="method" value="EM"/>
    <property type="resolution" value="3.70 A"/>
    <property type="chains" value="Q=2-124"/>
</dbReference>
<dbReference type="PDB" id="6WD9">
    <property type="method" value="EM"/>
    <property type="resolution" value="3.70 A"/>
    <property type="chains" value="Q=2-124"/>
</dbReference>
<dbReference type="PDB" id="6WDA">
    <property type="method" value="EM"/>
    <property type="resolution" value="3.80 A"/>
    <property type="chains" value="Q=2-124"/>
</dbReference>
<dbReference type="PDB" id="6WDB">
    <property type="method" value="EM"/>
    <property type="resolution" value="4.00 A"/>
    <property type="chains" value="Q=2-124"/>
</dbReference>
<dbReference type="PDB" id="6WDC">
    <property type="method" value="EM"/>
    <property type="resolution" value="4.20 A"/>
    <property type="chains" value="Q=2-124"/>
</dbReference>
<dbReference type="PDB" id="6WDD">
    <property type="method" value="EM"/>
    <property type="resolution" value="3.20 A"/>
    <property type="chains" value="Q=2-124"/>
</dbReference>
<dbReference type="PDB" id="6WDE">
    <property type="method" value="EM"/>
    <property type="resolution" value="3.00 A"/>
    <property type="chains" value="Q=2-124"/>
</dbReference>
<dbReference type="PDB" id="6WDF">
    <property type="method" value="EM"/>
    <property type="resolution" value="3.30 A"/>
    <property type="chains" value="Q=2-124"/>
</dbReference>
<dbReference type="PDB" id="6WDG">
    <property type="method" value="EM"/>
    <property type="resolution" value="3.30 A"/>
    <property type="chains" value="Q=2-124"/>
</dbReference>
<dbReference type="PDB" id="6WDH">
    <property type="method" value="EM"/>
    <property type="resolution" value="4.30 A"/>
    <property type="chains" value="Q=2-124"/>
</dbReference>
<dbReference type="PDB" id="6WDI">
    <property type="method" value="EM"/>
    <property type="resolution" value="4.00 A"/>
    <property type="chains" value="Q=2-124"/>
</dbReference>
<dbReference type="PDB" id="6WDJ">
    <property type="method" value="EM"/>
    <property type="resolution" value="3.70 A"/>
    <property type="chains" value="Q=2-124"/>
</dbReference>
<dbReference type="PDB" id="6WDK">
    <property type="method" value="EM"/>
    <property type="resolution" value="3.60 A"/>
    <property type="chains" value="Q=2-124"/>
</dbReference>
<dbReference type="PDB" id="6WDL">
    <property type="method" value="EM"/>
    <property type="resolution" value="3.70 A"/>
    <property type="chains" value="Q=2-124"/>
</dbReference>
<dbReference type="PDB" id="6WDM">
    <property type="method" value="EM"/>
    <property type="resolution" value="3.60 A"/>
    <property type="chains" value="Q=2-124"/>
</dbReference>
<dbReference type="PDB" id="6WNV">
    <property type="method" value="EM"/>
    <property type="resolution" value="3.50 A"/>
    <property type="chains" value="Q=2-124"/>
</dbReference>
<dbReference type="PDB" id="6WNW">
    <property type="method" value="EM"/>
    <property type="resolution" value="3.20 A"/>
    <property type="chains" value="Q=2-124"/>
</dbReference>
<dbReference type="PDB" id="6X6T">
    <property type="method" value="EM"/>
    <property type="resolution" value="3.20 A"/>
    <property type="chains" value="R=1-124"/>
</dbReference>
<dbReference type="PDB" id="6X7F">
    <property type="method" value="EM"/>
    <property type="resolution" value="3.50 A"/>
    <property type="chains" value="R=1-124"/>
</dbReference>
<dbReference type="PDB" id="6X7K">
    <property type="method" value="EM"/>
    <property type="resolution" value="3.10 A"/>
    <property type="chains" value="R=1-124"/>
</dbReference>
<dbReference type="PDB" id="6X9Q">
    <property type="method" value="EM"/>
    <property type="resolution" value="4.80 A"/>
    <property type="chains" value="R=1-124"/>
</dbReference>
<dbReference type="PDB" id="6XDQ">
    <property type="method" value="EM"/>
    <property type="resolution" value="3.70 A"/>
    <property type="chains" value="R=1-124"/>
</dbReference>
<dbReference type="PDB" id="6XDR">
    <property type="method" value="EM"/>
    <property type="resolution" value="4.70 A"/>
    <property type="chains" value="R=1-124"/>
</dbReference>
<dbReference type="PDB" id="6XE0">
    <property type="method" value="EM"/>
    <property type="resolution" value="6.80 A"/>
    <property type="chains" value="K=2-124"/>
</dbReference>
<dbReference type="PDB" id="6XGF">
    <property type="method" value="EM"/>
    <property type="resolution" value="5.00 A"/>
    <property type="chains" value="R=1-124"/>
</dbReference>
<dbReference type="PDB" id="6XII">
    <property type="method" value="EM"/>
    <property type="resolution" value="7.00 A"/>
    <property type="chains" value="R=1-124"/>
</dbReference>
<dbReference type="PDB" id="6XIJ">
    <property type="method" value="EM"/>
    <property type="resolution" value="8.00 A"/>
    <property type="chains" value="R=1-124"/>
</dbReference>
<dbReference type="PDB" id="6XZA">
    <property type="method" value="EM"/>
    <property type="resolution" value="2.66 A"/>
    <property type="chains" value="L1=2-124"/>
</dbReference>
<dbReference type="PDB" id="6XZB">
    <property type="method" value="EM"/>
    <property type="resolution" value="2.54 A"/>
    <property type="chains" value="L1=2-124"/>
</dbReference>
<dbReference type="PDB" id="6Y69">
    <property type="method" value="EM"/>
    <property type="resolution" value="2.86 A"/>
    <property type="chains" value="l=2-124"/>
</dbReference>
<dbReference type="PDB" id="6ZTJ">
    <property type="method" value="EM"/>
    <property type="resolution" value="3.40 A"/>
    <property type="chains" value="AL=1-124"/>
</dbReference>
<dbReference type="PDB" id="6ZTL">
    <property type="method" value="EM"/>
    <property type="resolution" value="3.50 A"/>
    <property type="chains" value="AL=1-124"/>
</dbReference>
<dbReference type="PDB" id="6ZTM">
    <property type="method" value="EM"/>
    <property type="resolution" value="3.30 A"/>
    <property type="chains" value="AL=1-124"/>
</dbReference>
<dbReference type="PDB" id="6ZTN">
    <property type="method" value="EM"/>
    <property type="resolution" value="3.90 A"/>
    <property type="chains" value="AL=1-124"/>
</dbReference>
<dbReference type="PDB" id="6ZTO">
    <property type="method" value="EM"/>
    <property type="resolution" value="3.00 A"/>
    <property type="chains" value="AL=1-124"/>
</dbReference>
<dbReference type="PDB" id="6ZTP">
    <property type="method" value="EM"/>
    <property type="resolution" value="3.00 A"/>
    <property type="chains" value="AL=1-124"/>
</dbReference>
<dbReference type="PDB" id="6ZU1">
    <property type="method" value="EM"/>
    <property type="resolution" value="3.00 A"/>
    <property type="chains" value="AL=1-124"/>
</dbReference>
<dbReference type="PDB" id="7ABZ">
    <property type="method" value="EM"/>
    <property type="resolution" value="3.21 A"/>
    <property type="chains" value="q=2-124"/>
</dbReference>
<dbReference type="PDB" id="7AC7">
    <property type="method" value="EM"/>
    <property type="resolution" value="3.08 A"/>
    <property type="chains" value="q=2-124"/>
</dbReference>
<dbReference type="PDB" id="7ACJ">
    <property type="method" value="EM"/>
    <property type="resolution" value="3.20 A"/>
    <property type="chains" value="q=2-123"/>
</dbReference>
<dbReference type="PDB" id="7ACR">
    <property type="method" value="EM"/>
    <property type="resolution" value="3.44 A"/>
    <property type="chains" value="q=2-123"/>
</dbReference>
<dbReference type="PDB" id="7AFI">
    <property type="method" value="EM"/>
    <property type="resolution" value="3.53 A"/>
    <property type="chains" value="L=1-124"/>
</dbReference>
<dbReference type="PDB" id="7AFL">
    <property type="method" value="EM"/>
    <property type="resolution" value="4.20 A"/>
    <property type="chains" value="L=1-124"/>
</dbReference>
<dbReference type="PDB" id="7AFO">
    <property type="method" value="EM"/>
    <property type="resolution" value="3.93 A"/>
    <property type="chains" value="L=1-124"/>
</dbReference>
<dbReference type="PDB" id="7B5K">
    <property type="method" value="EM"/>
    <property type="resolution" value="2.90 A"/>
    <property type="chains" value="l=2-124"/>
</dbReference>
<dbReference type="PDB" id="7BOD">
    <property type="method" value="EM"/>
    <property type="resolution" value="2.88 A"/>
    <property type="chains" value="L=1-124"/>
</dbReference>
<dbReference type="PDB" id="7BOE">
    <property type="method" value="EM"/>
    <property type="resolution" value="2.90 A"/>
    <property type="chains" value="L=1-124"/>
</dbReference>
<dbReference type="PDB" id="7BOF">
    <property type="method" value="EM"/>
    <property type="resolution" value="2.92 A"/>
    <property type="chains" value="L=1-124"/>
</dbReference>
<dbReference type="PDB" id="7BOG">
    <property type="method" value="EM"/>
    <property type="resolution" value="2.75 A"/>
    <property type="chains" value="L=1-124"/>
</dbReference>
<dbReference type="PDB" id="7BOH">
    <property type="method" value="EM"/>
    <property type="resolution" value="2.82 A"/>
    <property type="chains" value="L=1-124"/>
</dbReference>
<dbReference type="PDB" id="7BOI">
    <property type="method" value="EM"/>
    <property type="resolution" value="2.98 A"/>
    <property type="chains" value="L=1-124"/>
</dbReference>
<dbReference type="PDB" id="7D6Z">
    <property type="method" value="EM"/>
    <property type="resolution" value="3.40 A"/>
    <property type="chains" value="s=1-124"/>
</dbReference>
<dbReference type="PDB" id="7D80">
    <property type="method" value="EM"/>
    <property type="resolution" value="4.10 A"/>
    <property type="chains" value="M=1-124"/>
</dbReference>
<dbReference type="PDB" id="7JSS">
    <property type="method" value="EM"/>
    <property type="resolution" value="3.70 A"/>
    <property type="chains" value="Q=2-124"/>
</dbReference>
<dbReference type="PDB" id="7JSW">
    <property type="method" value="EM"/>
    <property type="resolution" value="3.80 A"/>
    <property type="chains" value="Q=2-124"/>
</dbReference>
<dbReference type="PDB" id="7JSZ">
    <property type="method" value="EM"/>
    <property type="resolution" value="3.70 A"/>
    <property type="chains" value="Q=2-124"/>
</dbReference>
<dbReference type="PDB" id="7JT1">
    <property type="method" value="EM"/>
    <property type="resolution" value="3.30 A"/>
    <property type="chains" value="Q=2-124"/>
</dbReference>
<dbReference type="PDB" id="7JT2">
    <property type="method" value="EM"/>
    <property type="resolution" value="3.50 A"/>
    <property type="chains" value="Q=2-124"/>
</dbReference>
<dbReference type="PDB" id="7JT3">
    <property type="method" value="EM"/>
    <property type="resolution" value="3.70 A"/>
    <property type="chains" value="Q=2-124"/>
</dbReference>
<dbReference type="PDB" id="7K00">
    <property type="method" value="EM"/>
    <property type="resolution" value="1.98 A"/>
    <property type="chains" value="L=1-124"/>
</dbReference>
<dbReference type="PDB" id="7K50">
    <property type="method" value="EM"/>
    <property type="resolution" value="3.40 A"/>
    <property type="chains" value="Q=2-124"/>
</dbReference>
<dbReference type="PDB" id="7K51">
    <property type="method" value="EM"/>
    <property type="resolution" value="3.50 A"/>
    <property type="chains" value="Q=2-124"/>
</dbReference>
<dbReference type="PDB" id="7K52">
    <property type="method" value="EM"/>
    <property type="resolution" value="3.40 A"/>
    <property type="chains" value="Q=2-124"/>
</dbReference>
<dbReference type="PDB" id="7K53">
    <property type="method" value="EM"/>
    <property type="resolution" value="3.20 A"/>
    <property type="chains" value="Q=2-124"/>
</dbReference>
<dbReference type="PDB" id="7K54">
    <property type="method" value="EM"/>
    <property type="resolution" value="3.20 A"/>
    <property type="chains" value="Q=2-124"/>
</dbReference>
<dbReference type="PDB" id="7K55">
    <property type="method" value="EM"/>
    <property type="resolution" value="3.30 A"/>
    <property type="chains" value="Q=2-124"/>
</dbReference>
<dbReference type="PDB" id="7LV0">
    <property type="method" value="EM"/>
    <property type="resolution" value="3.20 A"/>
    <property type="chains" value="Q=2-124"/>
</dbReference>
<dbReference type="PDB" id="7M5D">
    <property type="method" value="EM"/>
    <property type="resolution" value="2.80 A"/>
    <property type="chains" value="q=2-124"/>
</dbReference>
<dbReference type="PDB" id="7NAR">
    <property type="method" value="EM"/>
    <property type="resolution" value="3.00 A"/>
    <property type="chains" value="L=1-124"/>
</dbReference>
<dbReference type="PDB" id="7NAS">
    <property type="method" value="EM"/>
    <property type="resolution" value="3.31 A"/>
    <property type="chains" value="L=1-124"/>
</dbReference>
<dbReference type="PDB" id="7NAT">
    <property type="method" value="EM"/>
    <property type="resolution" value="3.59 A"/>
    <property type="chains" value="L=1-124"/>
</dbReference>
<dbReference type="PDB" id="7NAU">
    <property type="method" value="EM"/>
    <property type="resolution" value="3.78 A"/>
    <property type="chains" value="L=1-124"/>
</dbReference>
<dbReference type="PDB" id="7NAV">
    <property type="method" value="EM"/>
    <property type="resolution" value="4.80 A"/>
    <property type="chains" value="L=1-124"/>
</dbReference>
<dbReference type="PDB" id="7NAX">
    <property type="method" value="EM"/>
    <property type="resolution" value="2.96 A"/>
    <property type="chains" value="L=1-124"/>
</dbReference>
<dbReference type="PDB" id="7NBU">
    <property type="method" value="EM"/>
    <property type="resolution" value="3.11 A"/>
    <property type="chains" value="L=2-124"/>
</dbReference>
<dbReference type="PDB" id="7NWT">
    <property type="method" value="EM"/>
    <property type="resolution" value="2.66 A"/>
    <property type="chains" value="q=1-124"/>
</dbReference>
<dbReference type="PDB" id="7O19">
    <property type="method" value="EM"/>
    <property type="resolution" value="2.90 A"/>
    <property type="chains" value="AL=1-124"/>
</dbReference>
<dbReference type="PDB" id="7O1A">
    <property type="method" value="EM"/>
    <property type="resolution" value="2.40 A"/>
    <property type="chains" value="AL=1-124"/>
</dbReference>
<dbReference type="PDB" id="7O1C">
    <property type="method" value="EM"/>
    <property type="resolution" value="2.60 A"/>
    <property type="chains" value="AL=1-124"/>
</dbReference>
<dbReference type="PDB" id="7O5H">
    <property type="method" value="EM"/>
    <property type="resolution" value="3.10 A"/>
    <property type="chains" value="L=2-124"/>
</dbReference>
<dbReference type="PDB" id="7OE0">
    <property type="method" value="EM"/>
    <property type="resolution" value="2.69 A"/>
    <property type="chains" value="L=2-124"/>
</dbReference>
<dbReference type="PDB" id="7OE1">
    <property type="method" value="EM"/>
    <property type="resolution" value="3.05 A"/>
    <property type="chains" value="L=2-124"/>
</dbReference>
<dbReference type="PDB" id="7OI0">
    <property type="method" value="EM"/>
    <property type="resolution" value="2.76 A"/>
    <property type="chains" value="L=2-124"/>
</dbReference>
<dbReference type="PDB" id="7OIZ">
    <property type="method" value="EM"/>
    <property type="resolution" value="2.90 A"/>
    <property type="chains" value="L=1-124"/>
</dbReference>
<dbReference type="PDB" id="7OJ0">
    <property type="method" value="EM"/>
    <property type="resolution" value="3.50 A"/>
    <property type="chains" value="L=1-124"/>
</dbReference>
<dbReference type="PDB" id="7P3K">
    <property type="method" value="EM"/>
    <property type="resolution" value="2.90 A"/>
    <property type="chains" value="L=1-124"/>
</dbReference>
<dbReference type="PDB" id="7PJU">
    <property type="method" value="EM"/>
    <property type="resolution" value="9.50 A"/>
    <property type="chains" value="l=1-124"/>
</dbReference>
<dbReference type="PDB" id="7PJV">
    <property type="method" value="EM"/>
    <property type="resolution" value="3.10 A"/>
    <property type="chains" value="l=1-124"/>
</dbReference>
<dbReference type="PDB" id="7PJY">
    <property type="method" value="EM"/>
    <property type="resolution" value="3.10 A"/>
    <property type="chains" value="l=1-124"/>
</dbReference>
<dbReference type="PDB" id="7QG8">
    <property type="method" value="EM"/>
    <property type="resolution" value="3.97 A"/>
    <property type="chains" value="E=1-124"/>
</dbReference>
<dbReference type="PDB" id="7QGH">
    <property type="method" value="EM"/>
    <property type="resolution" value="4.48 A"/>
    <property type="chains" value="B=1-124"/>
</dbReference>
<dbReference type="PDB" id="7QGN">
    <property type="method" value="EM"/>
    <property type="resolution" value="3.37 A"/>
    <property type="chains" value="E=1-124"/>
</dbReference>
<dbReference type="PDB" id="7QGR">
    <property type="method" value="EM"/>
    <property type="resolution" value="5.70 A"/>
    <property type="chains" value="B=1-124"/>
</dbReference>
<dbReference type="PDB" id="7S1G">
    <property type="method" value="EM"/>
    <property type="resolution" value="2.48 A"/>
    <property type="chains" value="t=1-124"/>
</dbReference>
<dbReference type="PDB" id="7S1H">
    <property type="method" value="EM"/>
    <property type="resolution" value="2.35 A"/>
    <property type="chains" value="t=1-124"/>
</dbReference>
<dbReference type="PDB" id="7S1I">
    <property type="method" value="EM"/>
    <property type="resolution" value="2.48 A"/>
    <property type="chains" value="t=1-124"/>
</dbReference>
<dbReference type="PDB" id="7S1J">
    <property type="method" value="EM"/>
    <property type="resolution" value="2.47 A"/>
    <property type="chains" value="t=1-124"/>
</dbReference>
<dbReference type="PDB" id="7S1K">
    <property type="method" value="EM"/>
    <property type="resolution" value="2.42 A"/>
    <property type="chains" value="t=1-124"/>
</dbReference>
<dbReference type="PDB" id="7SA4">
    <property type="method" value="EM"/>
    <property type="resolution" value="2.55 A"/>
    <property type="chains" value="q=1-124"/>
</dbReference>
<dbReference type="PDB" id="7SS9">
    <property type="method" value="EM"/>
    <property type="resolution" value="3.90 A"/>
    <property type="chains" value="Q=2-124"/>
</dbReference>
<dbReference type="PDB" id="7SSD">
    <property type="method" value="EM"/>
    <property type="resolution" value="3.30 A"/>
    <property type="chains" value="Q=2-124"/>
</dbReference>
<dbReference type="PDB" id="7SSL">
    <property type="method" value="EM"/>
    <property type="resolution" value="3.80 A"/>
    <property type="chains" value="Q=2-124"/>
</dbReference>
<dbReference type="PDB" id="7SSN">
    <property type="method" value="EM"/>
    <property type="resolution" value="3.20 A"/>
    <property type="chains" value="Q=2-124"/>
</dbReference>
<dbReference type="PDB" id="7SSO">
    <property type="method" value="EM"/>
    <property type="resolution" value="3.20 A"/>
    <property type="chains" value="Q=2-124"/>
</dbReference>
<dbReference type="PDB" id="7SSW">
    <property type="method" value="EM"/>
    <property type="resolution" value="3.80 A"/>
    <property type="chains" value="Q=2-124"/>
</dbReference>
<dbReference type="PDB" id="7ST2">
    <property type="method" value="EM"/>
    <property type="resolution" value="2.90 A"/>
    <property type="chains" value="Q=2-124"/>
</dbReference>
<dbReference type="PDB" id="7ST6">
    <property type="method" value="EM"/>
    <property type="resolution" value="3.00 A"/>
    <property type="chains" value="Q=2-124"/>
</dbReference>
<dbReference type="PDB" id="7ST7">
    <property type="method" value="EM"/>
    <property type="resolution" value="3.20 A"/>
    <property type="chains" value="Q=2-124"/>
</dbReference>
<dbReference type="PDB" id="7TOS">
    <property type="method" value="EM"/>
    <property type="resolution" value="2.90 A"/>
    <property type="chains" value="S12=2-124"/>
</dbReference>
<dbReference type="PDB" id="7UG7">
    <property type="method" value="EM"/>
    <property type="resolution" value="2.58 A"/>
    <property type="chains" value="SL=1-124"/>
</dbReference>
<dbReference type="PDB" id="7UPH">
    <property type="method" value="EM"/>
    <property type="resolution" value="4.18 A"/>
    <property type="chains" value="g=2-124"/>
</dbReference>
<dbReference type="PDB" id="7Y7C">
    <property type="method" value="EM"/>
    <property type="resolution" value="2.51 A"/>
    <property type="chains" value="L=1-124"/>
</dbReference>
<dbReference type="PDB" id="7Y7D">
    <property type="method" value="EM"/>
    <property type="resolution" value="2.58 A"/>
    <property type="chains" value="L=1-124"/>
</dbReference>
<dbReference type="PDB" id="7Y7E">
    <property type="method" value="EM"/>
    <property type="resolution" value="2.41 A"/>
    <property type="chains" value="L=1-124"/>
</dbReference>
<dbReference type="PDB" id="7Y7F">
    <property type="method" value="EM"/>
    <property type="resolution" value="2.43 A"/>
    <property type="chains" value="L=1-124"/>
</dbReference>
<dbReference type="PDB" id="7Y7G">
    <property type="method" value="EM"/>
    <property type="resolution" value="2.34 A"/>
    <property type="chains" value="L=1-124"/>
</dbReference>
<dbReference type="PDB" id="7Y7H">
    <property type="method" value="EM"/>
    <property type="resolution" value="2.51 A"/>
    <property type="chains" value="L=1-124"/>
</dbReference>
<dbReference type="PDB" id="7ZTA">
    <property type="method" value="EM"/>
    <property type="resolution" value="2.70 A"/>
    <property type="chains" value="S121=2-124"/>
</dbReference>
<dbReference type="PDB" id="8A3L">
    <property type="method" value="EM"/>
    <property type="resolution" value="3.42 A"/>
    <property type="chains" value="L=1-124"/>
</dbReference>
<dbReference type="PDB" id="8AKN">
    <property type="method" value="EM"/>
    <property type="resolution" value="2.30 A"/>
    <property type="chains" value="M=1-124"/>
</dbReference>
<dbReference type="PDB" id="8AM9">
    <property type="method" value="EM"/>
    <property type="resolution" value="2.80 A"/>
    <property type="chains" value="M=1-124"/>
</dbReference>
<dbReference type="PDB" id="8AYE">
    <property type="method" value="EM"/>
    <property type="resolution" value="1.96 A"/>
    <property type="chains" value="L=1-124"/>
</dbReference>
<dbReference type="PDB" id="8B0X">
    <property type="method" value="EM"/>
    <property type="resolution" value="1.55 A"/>
    <property type="chains" value="L=1-124"/>
</dbReference>
<dbReference type="PDB" id="8B7Y">
    <property type="method" value="EM"/>
    <property type="resolution" value="3.00 A"/>
    <property type="chains" value="q=1-124"/>
</dbReference>
<dbReference type="PDB" id="8BF7">
    <property type="method" value="EM"/>
    <property type="resolution" value="2.33 A"/>
    <property type="chains" value="p=1-124"/>
</dbReference>
<dbReference type="PDB" id="8BGE">
    <property type="method" value="EM"/>
    <property type="resolution" value="2.11 A"/>
    <property type="chains" value="p=1-124"/>
</dbReference>
<dbReference type="PDB" id="8BGH">
    <property type="method" value="EM"/>
    <property type="resolution" value="2.88 A"/>
    <property type="chains" value="p=1-124"/>
</dbReference>
<dbReference type="PDB" id="8BH4">
    <property type="method" value="EM"/>
    <property type="resolution" value="2.62 A"/>
    <property type="chains" value="p=1-124"/>
</dbReference>
<dbReference type="PDB" id="8BHJ">
    <property type="method" value="EM"/>
    <property type="resolution" value="2.81 A"/>
    <property type="chains" value="p=1-124"/>
</dbReference>
<dbReference type="PDB" id="8BHL">
    <property type="method" value="EM"/>
    <property type="resolution" value="2.21 A"/>
    <property type="chains" value="p=1-124"/>
</dbReference>
<dbReference type="PDB" id="8BHN">
    <property type="method" value="EM"/>
    <property type="resolution" value="2.85 A"/>
    <property type="chains" value="p=1-124"/>
</dbReference>
<dbReference type="PDB" id="8BHP">
    <property type="method" value="EM"/>
    <property type="resolution" value="2.37 A"/>
    <property type="chains" value="p=1-124"/>
</dbReference>
<dbReference type="PDB" id="8BIL">
    <property type="method" value="EM"/>
    <property type="resolution" value="2.04 A"/>
    <property type="chains" value="p=1-124"/>
</dbReference>
<dbReference type="PDB" id="8BIM">
    <property type="method" value="EM"/>
    <property type="resolution" value="2.04 A"/>
    <property type="chains" value="p=1-124"/>
</dbReference>
<dbReference type="PDB" id="8CAI">
    <property type="method" value="EM"/>
    <property type="resolution" value="2.08 A"/>
    <property type="chains" value="L=1-124"/>
</dbReference>
<dbReference type="PDB" id="8CEP">
    <property type="method" value="EM"/>
    <property type="resolution" value="2.04 A"/>
    <property type="chains" value="L=1-124"/>
</dbReference>
<dbReference type="PDB" id="8CGJ">
    <property type="method" value="EM"/>
    <property type="resolution" value="1.79 A"/>
    <property type="chains" value="L=1-124"/>
</dbReference>
<dbReference type="PDB" id="8CGR">
    <property type="method" value="EM"/>
    <property type="resolution" value="2.12 A"/>
    <property type="chains" value="L=1-124"/>
</dbReference>
<dbReference type="PDB" id="8CGU">
    <property type="method" value="EM"/>
    <property type="resolution" value="1.89 A"/>
    <property type="chains" value="L=1-124"/>
</dbReference>
<dbReference type="PDB" id="8EIU">
    <property type="method" value="EM"/>
    <property type="resolution" value="2.24 A"/>
    <property type="chains" value="L=1-124"/>
</dbReference>
<dbReference type="PDB" id="8EKC">
    <property type="method" value="EM"/>
    <property type="resolution" value="2.70 A"/>
    <property type="chains" value="l=1-124"/>
</dbReference>
<dbReference type="PDB" id="8EMM">
    <property type="method" value="EM"/>
    <property type="resolution" value="2.10 A"/>
    <property type="chains" value="L=1-124"/>
</dbReference>
<dbReference type="PDB" id="8EYQ">
    <property type="method" value="EM"/>
    <property type="resolution" value="3.30 A"/>
    <property type="chains" value="L=1-124"/>
</dbReference>
<dbReference type="PDB" id="8EYT">
    <property type="method" value="EM"/>
    <property type="resolution" value="2.80 A"/>
    <property type="chains" value="L=1-124"/>
</dbReference>
<dbReference type="PDB" id="8FIZ">
    <property type="method" value="EM"/>
    <property type="resolution" value="3.80 A"/>
    <property type="chains" value="AC=1-124"/>
</dbReference>
<dbReference type="PDB" id="8FTO">
    <property type="method" value="EM"/>
    <property type="resolution" value="1.85 A"/>
    <property type="chains" value="L=1-124"/>
</dbReference>
<dbReference type="PDB" id="8FZD">
    <property type="method" value="EM"/>
    <property type="resolution" value="3.10 A"/>
    <property type="chains" value="l=1-124"/>
</dbReference>
<dbReference type="PDB" id="8FZE">
    <property type="method" value="EM"/>
    <property type="resolution" value="3.00 A"/>
    <property type="chains" value="l=1-124"/>
</dbReference>
<dbReference type="PDB" id="8FZF">
    <property type="method" value="EM"/>
    <property type="resolution" value="3.20 A"/>
    <property type="chains" value="l=1-124"/>
</dbReference>
<dbReference type="PDB" id="8FZG">
    <property type="method" value="EM"/>
    <property type="resolution" value="3.10 A"/>
    <property type="chains" value="l=1-124"/>
</dbReference>
<dbReference type="PDB" id="8FZH">
    <property type="method" value="EM"/>
    <property type="resolution" value="2.90 A"/>
    <property type="chains" value="l=1-124"/>
</dbReference>
<dbReference type="PDB" id="8FZI">
    <property type="method" value="EM"/>
    <property type="resolution" value="3.10 A"/>
    <property type="chains" value="l=1-124"/>
</dbReference>
<dbReference type="PDB" id="8FZJ">
    <property type="method" value="EM"/>
    <property type="resolution" value="3.00 A"/>
    <property type="chains" value="l=1-124"/>
</dbReference>
<dbReference type="PDB" id="8G2U">
    <property type="method" value="EM"/>
    <property type="resolution" value="3.00 A"/>
    <property type="chains" value="k=2-124"/>
</dbReference>
<dbReference type="PDB" id="8G31">
    <property type="method" value="EM"/>
    <property type="resolution" value="3.20 A"/>
    <property type="chains" value="k=2-124"/>
</dbReference>
<dbReference type="PDB" id="8G34">
    <property type="method" value="EM"/>
    <property type="resolution" value="3.20 A"/>
    <property type="chains" value="k=2-124"/>
</dbReference>
<dbReference type="PDB" id="8G38">
    <property type="method" value="EM"/>
    <property type="resolution" value="3.20 A"/>
    <property type="chains" value="k=2-124"/>
</dbReference>
<dbReference type="PDB" id="8G6W">
    <property type="method" value="EM"/>
    <property type="resolution" value="2.02 A"/>
    <property type="chains" value="L=1-124"/>
</dbReference>
<dbReference type="PDB" id="8G7P">
    <property type="method" value="EM"/>
    <property type="resolution" value="2.90 A"/>
    <property type="chains" value="l=1-124"/>
</dbReference>
<dbReference type="PDB" id="8G7Q">
    <property type="method" value="EM"/>
    <property type="resolution" value="3.10 A"/>
    <property type="chains" value="l=1-124"/>
</dbReference>
<dbReference type="PDB" id="8G7R">
    <property type="method" value="EM"/>
    <property type="resolution" value="2.80 A"/>
    <property type="chains" value="l=1-124"/>
</dbReference>
<dbReference type="PDB" id="8G7S">
    <property type="method" value="EM"/>
    <property type="resolution" value="3.10 A"/>
    <property type="chains" value="l=1-124"/>
</dbReference>
<dbReference type="PDB" id="8GHU">
    <property type="method" value="EM"/>
    <property type="resolution" value="3.00 A"/>
    <property type="chains" value="l=2-124"/>
</dbReference>
<dbReference type="PDB" id="8HSP">
    <property type="method" value="EM"/>
    <property type="resolution" value="2.32 A"/>
    <property type="chains" value="L=1-124"/>
</dbReference>
<dbReference type="PDB" id="8HTZ">
    <property type="method" value="EM"/>
    <property type="resolution" value="2.40 A"/>
    <property type="chains" value="L=1-124"/>
</dbReference>
<dbReference type="PDB" id="8HU1">
    <property type="method" value="EM"/>
    <property type="resolution" value="2.69 A"/>
    <property type="chains" value="L=1-124"/>
</dbReference>
<dbReference type="PDB" id="8IFB">
    <property type="method" value="EM"/>
    <property type="resolution" value="2.43 A"/>
    <property type="chains" value="L=1-124"/>
</dbReference>
<dbReference type="PDB" id="8IFC">
    <property type="method" value="EM"/>
    <property type="resolution" value="2.90 A"/>
    <property type="chains" value="L=1-124"/>
</dbReference>
<dbReference type="PDB" id="8JSG">
    <property type="method" value="EM"/>
    <property type="resolution" value="4.60 A"/>
    <property type="chains" value="t=2-124"/>
</dbReference>
<dbReference type="PDB" id="8JSH">
    <property type="method" value="EM"/>
    <property type="resolution" value="4.40 A"/>
    <property type="chains" value="t=1-124"/>
</dbReference>
<dbReference type="PDB" id="8K3O">
    <property type="method" value="EM"/>
    <property type="resolution" value="3.88 A"/>
    <property type="chains" value="L=1-124"/>
</dbReference>
<dbReference type="PDB" id="8K4E">
    <property type="method" value="EM"/>
    <property type="resolution" value="3.40 A"/>
    <property type="chains" value="L=1-124"/>
</dbReference>
<dbReference type="PDB" id="8P16">
    <property type="method" value="EM"/>
    <property type="resolution" value="2.77 A"/>
    <property type="chains" value="q=1-124"/>
</dbReference>
<dbReference type="PDB" id="8P17">
    <property type="method" value="EM"/>
    <property type="resolution" value="2.78 A"/>
    <property type="chains" value="q=1-124"/>
</dbReference>
<dbReference type="PDB" id="8P18">
    <property type="method" value="EM"/>
    <property type="resolution" value="2.77 A"/>
    <property type="chains" value="q=1-124"/>
</dbReference>
<dbReference type="PDB" id="8PEG">
    <property type="method" value="EM"/>
    <property type="resolution" value="3.30 A"/>
    <property type="chains" value="L=1-124"/>
</dbReference>
<dbReference type="PDB" id="8PHJ">
    <property type="method" value="EM"/>
    <property type="resolution" value="3.67 A"/>
    <property type="chains" value="L=1-124"/>
</dbReference>
<dbReference type="PDB" id="8PKL">
    <property type="method" value="EM"/>
    <property type="resolution" value="3.09 A"/>
    <property type="chains" value="L=1-124"/>
</dbReference>
<dbReference type="PDB" id="8PVA">
    <property type="method" value="EM"/>
    <property type="resolution" value="4.50 A"/>
    <property type="chains" value="L=1-124"/>
</dbReference>
<dbReference type="PDB" id="8Q4F">
    <property type="method" value="EM"/>
    <property type="resolution" value="3.10 A"/>
    <property type="chains" value="L=1-124"/>
</dbReference>
<dbReference type="PDB" id="8QBT">
    <property type="method" value="EM"/>
    <property type="resolution" value="2.20 A"/>
    <property type="chains" value="t=1-124"/>
</dbReference>
<dbReference type="PDB" id="8QK7">
    <property type="method" value="EM"/>
    <property type="resolution" value="2.77 A"/>
    <property type="chains" value="q=1-124"/>
</dbReference>
<dbReference type="PDB" id="8QOA">
    <property type="method" value="EM"/>
    <property type="resolution" value="2.00 A"/>
    <property type="chains" value="L=1-124"/>
</dbReference>
<dbReference type="PDB" id="8R3V">
    <property type="method" value="EM"/>
    <property type="resolution" value="3.28 A"/>
    <property type="chains" value="L1/L2=1-124"/>
</dbReference>
<dbReference type="PDB" id="8R6C">
    <property type="method" value="EM"/>
    <property type="resolution" value="2.20 A"/>
    <property type="chains" value="L=1-124"/>
</dbReference>
<dbReference type="PDB" id="8R8M">
    <property type="method" value="EM"/>
    <property type="resolution" value="2.40 A"/>
    <property type="chains" value="L=1-124"/>
</dbReference>
<dbReference type="PDB" id="8RCL">
    <property type="method" value="EM"/>
    <property type="resolution" value="3.49 A"/>
    <property type="chains" value="L1/L2=1-124"/>
</dbReference>
<dbReference type="PDB" id="8RCM">
    <property type="method" value="EM"/>
    <property type="resolution" value="3.59 A"/>
    <property type="chains" value="L1/L2=1-124"/>
</dbReference>
<dbReference type="PDB" id="8RCS">
    <property type="method" value="EM"/>
    <property type="resolution" value="4.46 A"/>
    <property type="chains" value="L1/L2=1-124"/>
</dbReference>
<dbReference type="PDB" id="8RCT">
    <property type="method" value="EM"/>
    <property type="resolution" value="5.32 A"/>
    <property type="chains" value="L1/L2=1-124"/>
</dbReference>
<dbReference type="PDB" id="8SYL">
    <property type="method" value="EM"/>
    <property type="resolution" value="2.90 A"/>
    <property type="chains" value="l=1-124"/>
</dbReference>
<dbReference type="PDB" id="8T5D">
    <property type="method" value="EM"/>
    <property type="resolution" value="3.20 A"/>
    <property type="chains" value="k=2-124"/>
</dbReference>
<dbReference type="PDB" id="8T5H">
    <property type="method" value="EM"/>
    <property type="resolution" value="3.30 A"/>
    <property type="chains" value="k=2-124"/>
</dbReference>
<dbReference type="PDB" id="8UPO">
    <property type="method" value="EM"/>
    <property type="resolution" value="5.50 A"/>
    <property type="chains" value="R=1-124"/>
</dbReference>
<dbReference type="PDB" id="8UPR">
    <property type="method" value="EM"/>
    <property type="resolution" value="5.30 A"/>
    <property type="chains" value="R=1-124"/>
</dbReference>
<dbReference type="PDB" id="8UQL">
    <property type="method" value="EM"/>
    <property type="resolution" value="3.20 A"/>
    <property type="chains" value="R=1-124"/>
</dbReference>
<dbReference type="PDB" id="8UQM">
    <property type="method" value="EM"/>
    <property type="resolution" value="5.30 A"/>
    <property type="chains" value="R=1-124"/>
</dbReference>
<dbReference type="PDB" id="8UQP">
    <property type="method" value="EM"/>
    <property type="resolution" value="3.80 A"/>
    <property type="chains" value="R=1-124"/>
</dbReference>
<dbReference type="PDB" id="8UR0">
    <property type="method" value="EM"/>
    <property type="resolution" value="3.40 A"/>
    <property type="chains" value="R=1-124"/>
</dbReference>
<dbReference type="PDB" id="8URH">
    <property type="method" value="EM"/>
    <property type="resolution" value="5.70 A"/>
    <property type="chains" value="R=1-124"/>
</dbReference>
<dbReference type="PDB" id="8URI">
    <property type="method" value="EM"/>
    <property type="resolution" value="5.30 A"/>
    <property type="chains" value="R=1-124"/>
</dbReference>
<dbReference type="PDB" id="8URX">
    <property type="method" value="EM"/>
    <property type="resolution" value="6.60 A"/>
    <property type="chains" value="R=1-124"/>
</dbReference>
<dbReference type="PDB" id="8URY">
    <property type="method" value="EM"/>
    <property type="resolution" value="3.10 A"/>
    <property type="chains" value="R=1-124"/>
</dbReference>
<dbReference type="PDB" id="8VS9">
    <property type="method" value="EM"/>
    <property type="resolution" value="3.90 A"/>
    <property type="chains" value="S12=1-124"/>
</dbReference>
<dbReference type="PDB" id="8VSA">
    <property type="method" value="EM"/>
    <property type="resolution" value="3.70 A"/>
    <property type="chains" value="S12=1-124"/>
</dbReference>
<dbReference type="PDB" id="8YUO">
    <property type="method" value="EM"/>
    <property type="resolution" value="2.25 A"/>
    <property type="chains" value="L=1-124"/>
</dbReference>
<dbReference type="PDB" id="8YUP">
    <property type="method" value="EM"/>
    <property type="resolution" value="2.39 A"/>
    <property type="chains" value="L=1-124"/>
</dbReference>
<dbReference type="PDB" id="8YUQ">
    <property type="method" value="EM"/>
    <property type="resolution" value="2.41 A"/>
    <property type="chains" value="L=1-124"/>
</dbReference>
<dbReference type="PDB" id="8YUR">
    <property type="method" value="EM"/>
    <property type="resolution" value="2.47 A"/>
    <property type="chains" value="L=1-124"/>
</dbReference>
<dbReference type="PDB" id="8YUS">
    <property type="method" value="EM"/>
    <property type="resolution" value="2.43 A"/>
    <property type="chains" value="L=1-124"/>
</dbReference>
<dbReference type="PDB" id="9DUK">
    <property type="method" value="EM"/>
    <property type="resolution" value="2.56 A"/>
    <property type="chains" value="L=1-124"/>
</dbReference>
<dbReference type="PDB" id="9DUL">
    <property type="method" value="EM"/>
    <property type="resolution" value="2.56 A"/>
    <property type="chains" value="L=1-124"/>
</dbReference>
<dbReference type="PDB" id="9FBV">
    <property type="method" value="EM"/>
    <property type="resolution" value="2.40 A"/>
    <property type="chains" value="L=1-124"/>
</dbReference>
<dbReference type="PDB" id="9GFT">
    <property type="method" value="EM"/>
    <property type="resolution" value="3.10 A"/>
    <property type="chains" value="E/z=1-124"/>
</dbReference>
<dbReference type="PDB" id="9GGR">
    <property type="method" value="EM"/>
    <property type="resolution" value="3.20 A"/>
    <property type="chains" value="E/z=1-124"/>
</dbReference>
<dbReference type="PDB" id="9GUP">
    <property type="method" value="EM"/>
    <property type="resolution" value="2.80 A"/>
    <property type="chains" value="M=1-124"/>
</dbReference>
<dbReference type="PDB" id="9GUQ">
    <property type="method" value="EM"/>
    <property type="resolution" value="3.10 A"/>
    <property type="chains" value="M=1-124"/>
</dbReference>
<dbReference type="PDB" id="9GUS">
    <property type="method" value="EM"/>
    <property type="resolution" value="3.50 A"/>
    <property type="chains" value="M=1-124"/>
</dbReference>
<dbReference type="PDB" id="9GUT">
    <property type="method" value="EM"/>
    <property type="resolution" value="2.80 A"/>
    <property type="chains" value="M=1-124"/>
</dbReference>
<dbReference type="PDB" id="9GUU">
    <property type="method" value="EM"/>
    <property type="resolution" value="2.50 A"/>
    <property type="chains" value="M=1-124"/>
</dbReference>
<dbReference type="PDB" id="9GUV">
    <property type="method" value="EM"/>
    <property type="resolution" value="3.00 A"/>
    <property type="chains" value="M=1-124"/>
</dbReference>
<dbReference type="PDB" id="9GUW">
    <property type="method" value="EM"/>
    <property type="resolution" value="3.10 A"/>
    <property type="chains" value="M=1-124"/>
</dbReference>
<dbReference type="PDB" id="9GUX">
    <property type="method" value="EM"/>
    <property type="resolution" value="3.30 A"/>
    <property type="chains" value="M=1-124"/>
</dbReference>
<dbReference type="PDB" id="9MOR">
    <property type="method" value="EM"/>
    <property type="resolution" value="2.65 A"/>
    <property type="chains" value="q=1-124"/>
</dbReference>
<dbReference type="PDB" id="9MQ4">
    <property type="method" value="EM"/>
    <property type="resolution" value="2.78 A"/>
    <property type="chains" value="q=1-124"/>
</dbReference>
<dbReference type="PDBsum" id="1MJ1"/>
<dbReference type="PDBsum" id="1ZN1"/>
<dbReference type="PDBsum" id="2YKR"/>
<dbReference type="PDBsum" id="3DEG"/>
<dbReference type="PDBsum" id="3EP2"/>
<dbReference type="PDBsum" id="3EQ3"/>
<dbReference type="PDBsum" id="3EQ4"/>
<dbReference type="PDBsum" id="3IY8"/>
<dbReference type="PDBsum" id="3J0D"/>
<dbReference type="PDBsum" id="3J0E"/>
<dbReference type="PDBsum" id="3J9Y"/>
<dbReference type="PDBsum" id="3J9Z"/>
<dbReference type="PDBsum" id="3JA1"/>
<dbReference type="PDBsum" id="3JBU"/>
<dbReference type="PDBsum" id="3JBV"/>
<dbReference type="PDBsum" id="3JCD"/>
<dbReference type="PDBsum" id="3JCE"/>
<dbReference type="PDBsum" id="3JCJ"/>
<dbReference type="PDBsum" id="3JCN"/>
<dbReference type="PDBsum" id="4A2I"/>
<dbReference type="PDBsum" id="4ADV"/>
<dbReference type="PDBsum" id="4U1U"/>
<dbReference type="PDBsum" id="4U1V"/>
<dbReference type="PDBsum" id="4U20"/>
<dbReference type="PDBsum" id="4U24"/>
<dbReference type="PDBsum" id="4U25"/>
<dbReference type="PDBsum" id="4U26"/>
<dbReference type="PDBsum" id="4U27"/>
<dbReference type="PDBsum" id="4V47"/>
<dbReference type="PDBsum" id="4V48"/>
<dbReference type="PDBsum" id="4V4H"/>
<dbReference type="PDBsum" id="4V4Q"/>
<dbReference type="PDBsum" id="4V4V"/>
<dbReference type="PDBsum" id="4V4W"/>
<dbReference type="PDBsum" id="4V50"/>
<dbReference type="PDBsum" id="4V52"/>
<dbReference type="PDBsum" id="4V53"/>
<dbReference type="PDBsum" id="4V54"/>
<dbReference type="PDBsum" id="4V55"/>
<dbReference type="PDBsum" id="4V56"/>
<dbReference type="PDBsum" id="4V57"/>
<dbReference type="PDBsum" id="4V5B"/>
<dbReference type="PDBsum" id="4V5H"/>
<dbReference type="PDBsum" id="4V5Y"/>
<dbReference type="PDBsum" id="4V64"/>
<dbReference type="PDBsum" id="4V65"/>
<dbReference type="PDBsum" id="4V66"/>
<dbReference type="PDBsum" id="4V69"/>
<dbReference type="PDBsum" id="4V6C"/>
<dbReference type="PDBsum" id="4V6D"/>
<dbReference type="PDBsum" id="4V6E"/>
<dbReference type="PDBsum" id="4V6K"/>
<dbReference type="PDBsum" id="4V6L"/>
<dbReference type="PDBsum" id="4V6M"/>
<dbReference type="PDBsum" id="4V6N"/>
<dbReference type="PDBsum" id="4V6O"/>
<dbReference type="PDBsum" id="4V6P"/>
<dbReference type="PDBsum" id="4V6Q"/>
<dbReference type="PDBsum" id="4V6R"/>
<dbReference type="PDBsum" id="4V6S"/>
<dbReference type="PDBsum" id="4V6T"/>
<dbReference type="PDBsum" id="4V6V"/>
<dbReference type="PDBsum" id="4V6Y"/>
<dbReference type="PDBsum" id="4V6Z"/>
<dbReference type="PDBsum" id="4V70"/>
<dbReference type="PDBsum" id="4V71"/>
<dbReference type="PDBsum" id="4V72"/>
<dbReference type="PDBsum" id="4V73"/>
<dbReference type="PDBsum" id="4V74"/>
<dbReference type="PDBsum" id="4V75"/>
<dbReference type="PDBsum" id="4V76"/>
<dbReference type="PDBsum" id="4V77"/>
<dbReference type="PDBsum" id="4V78"/>
<dbReference type="PDBsum" id="4V79"/>
<dbReference type="PDBsum" id="4V7A"/>
<dbReference type="PDBsum" id="4V7B"/>
<dbReference type="PDBsum" id="4V7C"/>
<dbReference type="PDBsum" id="4V7D"/>
<dbReference type="PDBsum" id="4V7I"/>
<dbReference type="PDBsum" id="4V7S"/>
<dbReference type="PDBsum" id="4V7T"/>
<dbReference type="PDBsum" id="4V7U"/>
<dbReference type="PDBsum" id="4V7V"/>
<dbReference type="PDBsum" id="4V85"/>
<dbReference type="PDBsum" id="4V89"/>
<dbReference type="PDBsum" id="4V9C"/>
<dbReference type="PDBsum" id="4V9D"/>
<dbReference type="PDBsum" id="4V9O"/>
<dbReference type="PDBsum" id="4V9P"/>
<dbReference type="PDBsum" id="4WF1"/>
<dbReference type="PDBsum" id="4WOI"/>
<dbReference type="PDBsum" id="4WWW"/>
<dbReference type="PDBsum" id="4YBB"/>
<dbReference type="PDBsum" id="5AFI"/>
<dbReference type="PDBsum" id="5H5U"/>
<dbReference type="PDBsum" id="5IQR"/>
<dbReference type="PDBsum" id="5IT8"/>
<dbReference type="PDBsum" id="5J5B"/>
<dbReference type="PDBsum" id="5J7L"/>
<dbReference type="PDBsum" id="5J88"/>
<dbReference type="PDBsum" id="5J8A"/>
<dbReference type="PDBsum" id="5J91"/>
<dbReference type="PDBsum" id="5JC9"/>
<dbReference type="PDBsum" id="5JTE"/>
<dbReference type="PDBsum" id="5JU8"/>
<dbReference type="PDBsum" id="5KCR"/>
<dbReference type="PDBsum" id="5KCS"/>
<dbReference type="PDBsum" id="5KPS"/>
<dbReference type="PDBsum" id="5KPV"/>
<dbReference type="PDBsum" id="5KPW"/>
<dbReference type="PDBsum" id="5KPX"/>
<dbReference type="PDBsum" id="5L3P"/>
<dbReference type="PDBsum" id="5LZA"/>
<dbReference type="PDBsum" id="5LZB"/>
<dbReference type="PDBsum" id="5LZC"/>
<dbReference type="PDBsum" id="5LZD"/>
<dbReference type="PDBsum" id="5LZE"/>
<dbReference type="PDBsum" id="5LZF"/>
<dbReference type="PDBsum" id="5MDV"/>
<dbReference type="PDBsum" id="5MDW"/>
<dbReference type="PDBsum" id="5MDY"/>
<dbReference type="PDBsum" id="5MDZ"/>
<dbReference type="PDBsum" id="5ME0"/>
<dbReference type="PDBsum" id="5ME1"/>
<dbReference type="PDBsum" id="5MGP"/>
<dbReference type="PDBsum" id="5MY1"/>
<dbReference type="PDBsum" id="5NO2"/>
<dbReference type="PDBsum" id="5NO3"/>
<dbReference type="PDBsum" id="5NO4"/>
<dbReference type="PDBsum" id="5NP6"/>
<dbReference type="PDBsum" id="5NWY"/>
<dbReference type="PDBsum" id="5O2R"/>
<dbReference type="PDBsum" id="5U4I"/>
<dbReference type="PDBsum" id="5U4J"/>
<dbReference type="PDBsum" id="5U9F"/>
<dbReference type="PDBsum" id="5U9G"/>
<dbReference type="PDBsum" id="5UYK"/>
<dbReference type="PDBsum" id="5UYL"/>
<dbReference type="PDBsum" id="5UYM"/>
<dbReference type="PDBsum" id="5UYN"/>
<dbReference type="PDBsum" id="5UYP"/>
<dbReference type="PDBsum" id="5UYQ"/>
<dbReference type="PDBsum" id="5UZ4"/>
<dbReference type="PDBsum" id="5WDT"/>
<dbReference type="PDBsum" id="5WE4"/>
<dbReference type="PDBsum" id="5WE6"/>
<dbReference type="PDBsum" id="5WF0"/>
<dbReference type="PDBsum" id="5WFK"/>
<dbReference type="PDBsum" id="5WFS"/>
<dbReference type="PDBsum" id="6AWB"/>
<dbReference type="PDBsum" id="6AWC"/>
<dbReference type="PDBsum" id="6AWD"/>
<dbReference type="PDBsum" id="6BU8"/>
<dbReference type="PDBsum" id="6BY1"/>
<dbReference type="PDBsum" id="6C4I"/>
<dbReference type="PDBsum" id="6DNC"/>
<dbReference type="PDBsum" id="6ENF"/>
<dbReference type="PDBsum" id="6ENJ"/>
<dbReference type="PDBsum" id="6ENU"/>
<dbReference type="PDBsum" id="6GWT"/>
<dbReference type="PDBsum" id="6GXM"/>
<dbReference type="PDBsum" id="6GXN"/>
<dbReference type="PDBsum" id="6GXO"/>
<dbReference type="PDBsum" id="6GXP"/>
<dbReference type="PDBsum" id="6H4N"/>
<dbReference type="PDBsum" id="6H58"/>
<dbReference type="PDBsum" id="6HRM"/>
<dbReference type="PDBsum" id="6I7V"/>
<dbReference type="PDBsum" id="6O7K"/>
<dbReference type="PDBsum" id="6O9J"/>
<dbReference type="PDBsum" id="6O9K"/>
<dbReference type="PDBsum" id="6OFX"/>
<dbReference type="PDBsum" id="6OG7"/>
<dbReference type="PDBsum" id="6OGF"/>
<dbReference type="PDBsum" id="6OGG"/>
<dbReference type="PDBsum" id="6OGI"/>
<dbReference type="PDBsum" id="6OM6"/>
<dbReference type="PDBsum" id="6ORE"/>
<dbReference type="PDBsum" id="6ORL"/>
<dbReference type="PDBsum" id="6OSK"/>
<dbReference type="PDBsum" id="6OSQ"/>
<dbReference type="PDBsum" id="6OST"/>
<dbReference type="PDBsum" id="6OT3"/>
<dbReference type="PDBsum" id="6OUO"/>
<dbReference type="PDBsum" id="6Q9A"/>
<dbReference type="PDBsum" id="6SZS"/>
<dbReference type="PDBsum" id="6TBV"/>
<dbReference type="PDBsum" id="6TC3"/>
<dbReference type="PDBsum" id="6VU3"/>
<dbReference type="PDBsum" id="6VWL"/>
<dbReference type="PDBsum" id="6VWM"/>
<dbReference type="PDBsum" id="6VWN"/>
<dbReference type="PDBsum" id="6VYQ"/>
<dbReference type="PDBsum" id="6VYR"/>
<dbReference type="PDBsum" id="6VYS"/>
<dbReference type="PDBsum" id="6VYT"/>
<dbReference type="PDBsum" id="6VYU"/>
<dbReference type="PDBsum" id="6VYW"/>
<dbReference type="PDBsum" id="6VYX"/>
<dbReference type="PDBsum" id="6VYY"/>
<dbReference type="PDBsum" id="6VYZ"/>
<dbReference type="PDBsum" id="6VZ2"/>
<dbReference type="PDBsum" id="6VZ3"/>
<dbReference type="PDBsum" id="6VZ5"/>
<dbReference type="PDBsum" id="6VZ7"/>
<dbReference type="PDBsum" id="6VZJ"/>
<dbReference type="PDBsum" id="6W6K"/>
<dbReference type="PDBsum" id="6W77"/>
<dbReference type="PDBsum" id="6W7M"/>
<dbReference type="PDBsum" id="6W7N"/>
<dbReference type="PDBsum" id="6W7W"/>
<dbReference type="PDBsum" id="6WD0"/>
<dbReference type="PDBsum" id="6WD1"/>
<dbReference type="PDBsum" id="6WD2"/>
<dbReference type="PDBsum" id="6WD3"/>
<dbReference type="PDBsum" id="6WD4"/>
<dbReference type="PDBsum" id="6WD5"/>
<dbReference type="PDBsum" id="6WD6"/>
<dbReference type="PDBsum" id="6WD7"/>
<dbReference type="PDBsum" id="6WD8"/>
<dbReference type="PDBsum" id="6WD9"/>
<dbReference type="PDBsum" id="6WDA"/>
<dbReference type="PDBsum" id="6WDB"/>
<dbReference type="PDBsum" id="6WDC"/>
<dbReference type="PDBsum" id="6WDD"/>
<dbReference type="PDBsum" id="6WDE"/>
<dbReference type="PDBsum" id="6WDF"/>
<dbReference type="PDBsum" id="6WDG"/>
<dbReference type="PDBsum" id="6WDH"/>
<dbReference type="PDBsum" id="6WDI"/>
<dbReference type="PDBsum" id="6WDJ"/>
<dbReference type="PDBsum" id="6WDK"/>
<dbReference type="PDBsum" id="6WDL"/>
<dbReference type="PDBsum" id="6WDM"/>
<dbReference type="PDBsum" id="6WNV"/>
<dbReference type="PDBsum" id="6WNW"/>
<dbReference type="PDBsum" id="6X6T"/>
<dbReference type="PDBsum" id="6X7F"/>
<dbReference type="PDBsum" id="6X7K"/>
<dbReference type="PDBsum" id="6X9Q"/>
<dbReference type="PDBsum" id="6XDQ"/>
<dbReference type="PDBsum" id="6XDR"/>
<dbReference type="PDBsum" id="6XE0"/>
<dbReference type="PDBsum" id="6XGF"/>
<dbReference type="PDBsum" id="6XII"/>
<dbReference type="PDBsum" id="6XIJ"/>
<dbReference type="PDBsum" id="6XZA"/>
<dbReference type="PDBsum" id="6XZB"/>
<dbReference type="PDBsum" id="6Y69"/>
<dbReference type="PDBsum" id="6ZTJ"/>
<dbReference type="PDBsum" id="6ZTL"/>
<dbReference type="PDBsum" id="6ZTM"/>
<dbReference type="PDBsum" id="6ZTN"/>
<dbReference type="PDBsum" id="6ZTO"/>
<dbReference type="PDBsum" id="6ZTP"/>
<dbReference type="PDBsum" id="6ZU1"/>
<dbReference type="PDBsum" id="7ABZ"/>
<dbReference type="PDBsum" id="7AC7"/>
<dbReference type="PDBsum" id="7ACJ"/>
<dbReference type="PDBsum" id="7ACR"/>
<dbReference type="PDBsum" id="7AFI"/>
<dbReference type="PDBsum" id="7AFL"/>
<dbReference type="PDBsum" id="7AFO"/>
<dbReference type="PDBsum" id="7B5K"/>
<dbReference type="PDBsum" id="7BOD"/>
<dbReference type="PDBsum" id="7BOE"/>
<dbReference type="PDBsum" id="7BOF"/>
<dbReference type="PDBsum" id="7BOG"/>
<dbReference type="PDBsum" id="7BOH"/>
<dbReference type="PDBsum" id="7BOI"/>
<dbReference type="PDBsum" id="7D6Z"/>
<dbReference type="PDBsum" id="7D80"/>
<dbReference type="PDBsum" id="7JSS"/>
<dbReference type="PDBsum" id="7JSW"/>
<dbReference type="PDBsum" id="7JSZ"/>
<dbReference type="PDBsum" id="7JT1"/>
<dbReference type="PDBsum" id="7JT2"/>
<dbReference type="PDBsum" id="7JT3"/>
<dbReference type="PDBsum" id="7K00"/>
<dbReference type="PDBsum" id="7K50"/>
<dbReference type="PDBsum" id="7K51"/>
<dbReference type="PDBsum" id="7K52"/>
<dbReference type="PDBsum" id="7K53"/>
<dbReference type="PDBsum" id="7K54"/>
<dbReference type="PDBsum" id="7K55"/>
<dbReference type="PDBsum" id="7LV0"/>
<dbReference type="PDBsum" id="7M5D"/>
<dbReference type="PDBsum" id="7NAR"/>
<dbReference type="PDBsum" id="7NAS"/>
<dbReference type="PDBsum" id="7NAT"/>
<dbReference type="PDBsum" id="7NAU"/>
<dbReference type="PDBsum" id="7NAV"/>
<dbReference type="PDBsum" id="7NAX"/>
<dbReference type="PDBsum" id="7NBU"/>
<dbReference type="PDBsum" id="7NWT"/>
<dbReference type="PDBsum" id="7O19"/>
<dbReference type="PDBsum" id="7O1A"/>
<dbReference type="PDBsum" id="7O1C"/>
<dbReference type="PDBsum" id="7O5H"/>
<dbReference type="PDBsum" id="7OE0"/>
<dbReference type="PDBsum" id="7OE1"/>
<dbReference type="PDBsum" id="7OI0"/>
<dbReference type="PDBsum" id="7OIZ"/>
<dbReference type="PDBsum" id="7OJ0"/>
<dbReference type="PDBsum" id="7P3K"/>
<dbReference type="PDBsum" id="7PJU"/>
<dbReference type="PDBsum" id="7PJV"/>
<dbReference type="PDBsum" id="7PJY"/>
<dbReference type="PDBsum" id="7QG8"/>
<dbReference type="PDBsum" id="7QGH"/>
<dbReference type="PDBsum" id="7QGN"/>
<dbReference type="PDBsum" id="7QGR"/>
<dbReference type="PDBsum" id="7S1G"/>
<dbReference type="PDBsum" id="7S1H"/>
<dbReference type="PDBsum" id="7S1I"/>
<dbReference type="PDBsum" id="7S1J"/>
<dbReference type="PDBsum" id="7S1K"/>
<dbReference type="PDBsum" id="7SA4"/>
<dbReference type="PDBsum" id="7SS9"/>
<dbReference type="PDBsum" id="7SSD"/>
<dbReference type="PDBsum" id="7SSL"/>
<dbReference type="PDBsum" id="7SSN"/>
<dbReference type="PDBsum" id="7SSO"/>
<dbReference type="PDBsum" id="7SSW"/>
<dbReference type="PDBsum" id="7ST2"/>
<dbReference type="PDBsum" id="7ST6"/>
<dbReference type="PDBsum" id="7ST7"/>
<dbReference type="PDBsum" id="7TOS"/>
<dbReference type="PDBsum" id="7UG7"/>
<dbReference type="PDBsum" id="7UPH"/>
<dbReference type="PDBsum" id="7Y7C"/>
<dbReference type="PDBsum" id="7Y7D"/>
<dbReference type="PDBsum" id="7Y7E"/>
<dbReference type="PDBsum" id="7Y7F"/>
<dbReference type="PDBsum" id="7Y7G"/>
<dbReference type="PDBsum" id="7Y7H"/>
<dbReference type="PDBsum" id="7ZTA"/>
<dbReference type="PDBsum" id="8A3L"/>
<dbReference type="PDBsum" id="8AKN"/>
<dbReference type="PDBsum" id="8AM9"/>
<dbReference type="PDBsum" id="8AYE"/>
<dbReference type="PDBsum" id="8B0X"/>
<dbReference type="PDBsum" id="8B7Y"/>
<dbReference type="PDBsum" id="8BF7"/>
<dbReference type="PDBsum" id="8BGE"/>
<dbReference type="PDBsum" id="8BGH"/>
<dbReference type="PDBsum" id="8BH4"/>
<dbReference type="PDBsum" id="8BHJ"/>
<dbReference type="PDBsum" id="8BHL"/>
<dbReference type="PDBsum" id="8BHN"/>
<dbReference type="PDBsum" id="8BHP"/>
<dbReference type="PDBsum" id="8BIL"/>
<dbReference type="PDBsum" id="8BIM"/>
<dbReference type="PDBsum" id="8CAI"/>
<dbReference type="PDBsum" id="8CEP"/>
<dbReference type="PDBsum" id="8CGJ"/>
<dbReference type="PDBsum" id="8CGR"/>
<dbReference type="PDBsum" id="8CGU"/>
<dbReference type="PDBsum" id="8EIU"/>
<dbReference type="PDBsum" id="8EKC"/>
<dbReference type="PDBsum" id="8EMM"/>
<dbReference type="PDBsum" id="8EYQ"/>
<dbReference type="PDBsum" id="8EYT"/>
<dbReference type="PDBsum" id="8FIZ"/>
<dbReference type="PDBsum" id="8FTO"/>
<dbReference type="PDBsum" id="8FZD"/>
<dbReference type="PDBsum" id="8FZE"/>
<dbReference type="PDBsum" id="8FZF"/>
<dbReference type="PDBsum" id="8FZG"/>
<dbReference type="PDBsum" id="8FZH"/>
<dbReference type="PDBsum" id="8FZI"/>
<dbReference type="PDBsum" id="8FZJ"/>
<dbReference type="PDBsum" id="8G2U"/>
<dbReference type="PDBsum" id="8G31"/>
<dbReference type="PDBsum" id="8G34"/>
<dbReference type="PDBsum" id="8G38"/>
<dbReference type="PDBsum" id="8G6W"/>
<dbReference type="PDBsum" id="8G7P"/>
<dbReference type="PDBsum" id="8G7Q"/>
<dbReference type="PDBsum" id="8G7R"/>
<dbReference type="PDBsum" id="8G7S"/>
<dbReference type="PDBsum" id="8GHU"/>
<dbReference type="PDBsum" id="8HSP"/>
<dbReference type="PDBsum" id="8HTZ"/>
<dbReference type="PDBsum" id="8HU1"/>
<dbReference type="PDBsum" id="8IFB"/>
<dbReference type="PDBsum" id="8IFC"/>
<dbReference type="PDBsum" id="8JSG"/>
<dbReference type="PDBsum" id="8JSH"/>
<dbReference type="PDBsum" id="8K3O"/>
<dbReference type="PDBsum" id="8K4E"/>
<dbReference type="PDBsum" id="8P16"/>
<dbReference type="PDBsum" id="8P17"/>
<dbReference type="PDBsum" id="8P18"/>
<dbReference type="PDBsum" id="8PEG"/>
<dbReference type="PDBsum" id="8PHJ"/>
<dbReference type="PDBsum" id="8PKL"/>
<dbReference type="PDBsum" id="8PVA"/>
<dbReference type="PDBsum" id="8Q4F"/>
<dbReference type="PDBsum" id="8QBT"/>
<dbReference type="PDBsum" id="8QK7"/>
<dbReference type="PDBsum" id="8QOA"/>
<dbReference type="PDBsum" id="8R3V"/>
<dbReference type="PDBsum" id="8R6C"/>
<dbReference type="PDBsum" id="8R8M"/>
<dbReference type="PDBsum" id="8RCL"/>
<dbReference type="PDBsum" id="8RCM"/>
<dbReference type="PDBsum" id="8RCS"/>
<dbReference type="PDBsum" id="8RCT"/>
<dbReference type="PDBsum" id="8SYL"/>
<dbReference type="PDBsum" id="8T5D"/>
<dbReference type="PDBsum" id="8T5H"/>
<dbReference type="PDBsum" id="8UPO"/>
<dbReference type="PDBsum" id="8UPR"/>
<dbReference type="PDBsum" id="8UQL"/>
<dbReference type="PDBsum" id="8UQM"/>
<dbReference type="PDBsum" id="8UQP"/>
<dbReference type="PDBsum" id="8UR0"/>
<dbReference type="PDBsum" id="8URH"/>
<dbReference type="PDBsum" id="8URI"/>
<dbReference type="PDBsum" id="8URX"/>
<dbReference type="PDBsum" id="8URY"/>
<dbReference type="PDBsum" id="8VS9"/>
<dbReference type="PDBsum" id="8VSA"/>
<dbReference type="PDBsum" id="8YUO"/>
<dbReference type="PDBsum" id="8YUP"/>
<dbReference type="PDBsum" id="8YUQ"/>
<dbReference type="PDBsum" id="8YUR"/>
<dbReference type="PDBsum" id="8YUS"/>
<dbReference type="PDBsum" id="9DUK"/>
<dbReference type="PDBsum" id="9DUL"/>
<dbReference type="PDBsum" id="9FBV"/>
<dbReference type="PDBsum" id="9GFT"/>
<dbReference type="PDBsum" id="9GGR"/>
<dbReference type="PDBsum" id="9GUP"/>
<dbReference type="PDBsum" id="9GUQ"/>
<dbReference type="PDBsum" id="9GUS"/>
<dbReference type="PDBsum" id="9GUT"/>
<dbReference type="PDBsum" id="9GUU"/>
<dbReference type="PDBsum" id="9GUV"/>
<dbReference type="PDBsum" id="9GUW"/>
<dbReference type="PDBsum" id="9GUX"/>
<dbReference type="PDBsum" id="9MOR"/>
<dbReference type="PDBsum" id="9MQ4"/>
<dbReference type="EMDB" id="EMD-0076"/>
<dbReference type="EMDB" id="EMD-0080"/>
<dbReference type="EMDB" id="EMD-0081"/>
<dbReference type="EMDB" id="EMD-0082"/>
<dbReference type="EMDB" id="EMD-0083"/>
<dbReference type="EMDB" id="EMD-0137"/>
<dbReference type="EMDB" id="EMD-0139"/>
<dbReference type="EMDB" id="EMD-0261"/>
<dbReference type="EMDB" id="EMD-10353"/>
<dbReference type="EMDB" id="EMD-10453"/>
<dbReference type="EMDB" id="EMD-10458"/>
<dbReference type="EMDB" id="EMD-10656"/>
<dbReference type="EMDB" id="EMD-10657"/>
<dbReference type="EMDB" id="EMD-10705"/>
<dbReference type="EMDB" id="EMD-11419"/>
<dbReference type="EMDB" id="EMD-11710"/>
<dbReference type="EMDB" id="EMD-11713"/>
<dbReference type="EMDB" id="EMD-11717"/>
<dbReference type="EMDB" id="EMD-11718"/>
<dbReference type="EMDB" id="EMD-12035"/>
<dbReference type="EMDB" id="EMD-12239"/>
<dbReference type="EMDB" id="EMD-12240"/>
<dbReference type="EMDB" id="EMD-12241"/>
<dbReference type="EMDB" id="EMD-12242"/>
<dbReference type="EMDB" id="EMD-12243"/>
<dbReference type="EMDB" id="EMD-12244"/>
<dbReference type="EMDB" id="EMD-12245"/>
<dbReference type="EMDB" id="EMD-12246"/>
<dbReference type="EMDB" id="EMD-12247"/>
<dbReference type="EMDB" id="EMD-12248"/>
<dbReference type="EMDB" id="EMD-12249"/>
<dbReference type="EMDB" id="EMD-12261"/>
<dbReference type="EMDB" id="EMD-12635"/>
<dbReference type="EMDB" id="EMD-12693"/>
<dbReference type="EMDB" id="EMD-12694"/>
<dbReference type="EMDB" id="EMD-12695"/>
<dbReference type="EMDB" id="EMD-12936"/>
<dbReference type="EMDB" id="EMD-12937"/>
<dbReference type="EMDB" id="EMD-13180"/>
<dbReference type="EMDB" id="EMD-13461"/>
<dbReference type="EMDB" id="EMD-13464"/>
<dbReference type="EMDB" id="EMD-13952"/>
<dbReference type="EMDB" id="EMD-13955"/>
<dbReference type="EMDB" id="EMD-14956"/>
<dbReference type="EMDB" id="EMD-15116"/>
<dbReference type="EMDB" id="EMD-15712"/>
<dbReference type="EMDB" id="EMD-15793"/>
<dbReference type="EMDB" id="EMD-15905"/>
<dbReference type="EMDB" id="EMD-16015"/>
<dbReference type="EMDB" id="EMD-16029"/>
<dbReference type="EMDB" id="EMD-16031"/>
<dbReference type="EMDB" id="EMD-16047"/>
<dbReference type="EMDB" id="EMD-16057"/>
<dbReference type="EMDB" id="EMD-16059"/>
<dbReference type="EMDB" id="EMD-16062"/>
<dbReference type="EMDB" id="EMD-16065"/>
<dbReference type="EMDB" id="EMD-16081"/>
<dbReference type="EMDB" id="EMD-16082"/>
<dbReference type="EMDB" id="EMD-16526"/>
<dbReference type="EMDB" id="EMD-16612"/>
<dbReference type="EMDB" id="EMD-16645"/>
<dbReference type="EMDB" id="EMD-16650"/>
<dbReference type="EMDB" id="EMD-16651"/>
<dbReference type="EMDB" id="EMD-17346"/>
<dbReference type="EMDB" id="EMD-17347"/>
<dbReference type="EMDB" id="EMD-17348"/>
<dbReference type="EMDB" id="EMD-17631"/>
<dbReference type="EMDB" id="EMD-17667"/>
<dbReference type="EMDB" id="EMD-17743"/>
<dbReference type="EMDB" id="EMD-17959"/>
<dbReference type="EMDB" id="EMD-18145"/>
<dbReference type="EMDB" id="EMD-18458"/>
<dbReference type="EMDB" id="EMD-18534"/>
<dbReference type="EMDB" id="EMD-18875"/>
<dbReference type="EMDB" id="EMD-18950"/>
<dbReference type="EMDB" id="EMD-19004"/>
<dbReference type="EMDB" id="EMD-19054"/>
<dbReference type="EMDB" id="EMD-19055"/>
<dbReference type="EMDB" id="EMD-19058"/>
<dbReference type="EMDB" id="EMD-19059"/>
<dbReference type="EMDB" id="EMD-20048"/>
<dbReference type="EMDB" id="EMD-20052"/>
<dbReference type="EMDB" id="EMD-21420"/>
<dbReference type="EMDB" id="EMD-21421"/>
<dbReference type="EMDB" id="EMD-21422"/>
<dbReference type="EMDB" id="EMD-21558"/>
<dbReference type="EMDB" id="EMD-21569"/>
<dbReference type="EMDB" id="EMD-21571"/>
<dbReference type="EMDB" id="EMD-21572"/>
<dbReference type="EMDB" id="EMD-21573"/>
<dbReference type="EMDB" id="EMD-21625"/>
<dbReference type="EMDB" id="EMD-21630"/>
<dbReference type="EMDB" id="EMD-21631"/>
<dbReference type="EMDB" id="EMD-21632"/>
<dbReference type="EMDB" id="EMD-21633"/>
<dbReference type="EMDB" id="EMD-21634"/>
<dbReference type="EMDB" id="EMD-21635"/>
<dbReference type="EMDB" id="EMD-21636"/>
<dbReference type="EMDB" id="EMD-21637"/>
<dbReference type="EMDB" id="EMD-21638"/>
<dbReference type="EMDB" id="EMD-21639"/>
<dbReference type="EMDB" id="EMD-21640"/>
<dbReference type="EMDB" id="EMD-21641"/>
<dbReference type="EMDB" id="EMD-21857"/>
<dbReference type="EMDB" id="EMD-21858"/>
<dbReference type="EMDB" id="EMD-22143"/>
<dbReference type="EMDB" id="EMD-22459"/>
<dbReference type="EMDB" id="EMD-22461"/>
<dbReference type="EMDB" id="EMD-22464"/>
<dbReference type="EMDB" id="EMD-22466"/>
<dbReference type="EMDB" id="EMD-22469"/>
<dbReference type="EMDB" id="EMD-22472"/>
<dbReference type="EMDB" id="EMD-22669"/>
<dbReference type="EMDB" id="EMD-22670"/>
<dbReference type="EMDB" id="EMD-22671"/>
<dbReference type="EMDB" id="EMD-22672"/>
<dbReference type="EMDB" id="EMD-22673"/>
<dbReference type="EMDB" id="EMD-22674"/>
<dbReference type="EMDB" id="EMD-23528"/>
<dbReference type="EMDB" id="EMD-24802"/>
<dbReference type="EMDB" id="EMD-24803"/>
<dbReference type="EMDB" id="EMD-24804"/>
<dbReference type="EMDB" id="EMD-25405"/>
<dbReference type="EMDB" id="EMD-25407"/>
<dbReference type="EMDB" id="EMD-25409"/>
<dbReference type="EMDB" id="EMD-25410"/>
<dbReference type="EMDB" id="EMD-25411"/>
<dbReference type="EMDB" id="EMD-25415"/>
<dbReference type="EMDB" id="EMD-25418"/>
<dbReference type="EMDB" id="EMD-25420"/>
<dbReference type="EMDB" id="EMD-25421"/>
<dbReference type="EMDB" id="EMD-26486"/>
<dbReference type="EMDB" id="EMD-28692"/>
<dbReference type="EMDB" id="EMD-29214"/>
<dbReference type="EMDB" id="EMD-30598"/>
<dbReference type="EMDB" id="EMD-30611"/>
<dbReference type="EMDB" id="EMD-33660"/>
<dbReference type="EMDB" id="EMD-33661"/>
<dbReference type="EMDB" id="EMD-33662"/>
<dbReference type="EMDB" id="EMD-33663"/>
<dbReference type="EMDB" id="EMD-33664"/>
<dbReference type="EMDB" id="EMD-33665"/>
<dbReference type="EMDB" id="EMD-3489"/>
<dbReference type="EMDB" id="EMD-3490"/>
<dbReference type="EMDB" id="EMD-3492"/>
<dbReference type="EMDB" id="EMD-3493"/>
<dbReference type="EMDB" id="EMD-3494"/>
<dbReference type="EMDB" id="EMD-3495"/>
<dbReference type="EMDB" id="EMD-35001"/>
<dbReference type="EMDB" id="EMD-35020"/>
<dbReference type="EMDB" id="EMD-35022"/>
<dbReference type="EMDB" id="EMD-3508"/>
<dbReference type="EMDB" id="EMD-35411"/>
<dbReference type="EMDB" id="EMD-35412"/>
<dbReference type="EMDB" id="EMD-3580"/>
<dbReference type="EMDB" id="EMD-3661"/>
<dbReference type="EMDB" id="EMD-36619"/>
<dbReference type="EMDB" id="EMD-3662"/>
<dbReference type="EMDB" id="EMD-36620"/>
<dbReference type="EMDB" id="EMD-3663"/>
<dbReference type="EMDB" id="EMD-36854"/>
<dbReference type="EMDB" id="EMD-36883"/>
<dbReference type="EMDB" id="EMD-3713"/>
<dbReference type="EMDB" id="EMD-3730"/>
<dbReference type="EMDB" id="EMD-3898"/>
<dbReference type="EMDB" id="EMD-3899"/>
<dbReference type="EMDB" id="EMD-3903"/>
<dbReference type="EMDB" id="EMD-39577"/>
<dbReference type="EMDB" id="EMD-39578"/>
<dbReference type="EMDB" id="EMD-39579"/>
<dbReference type="EMDB" id="EMD-39580"/>
<dbReference type="EMDB" id="EMD-39581"/>
<dbReference type="EMDB" id="EMD-4001"/>
<dbReference type="EMDB" id="EMD-4121"/>
<dbReference type="EMDB" id="EMD-4122"/>
<dbReference type="EMDB" id="EMD-4123"/>
<dbReference type="EMDB" id="EMD-4124"/>
<dbReference type="EMDB" id="EMD-4125"/>
<dbReference type="EMDB" id="EMD-4126"/>
<dbReference type="EMDB" id="EMD-42453"/>
<dbReference type="EMDB" id="EMD-42454"/>
<dbReference type="EMDB" id="EMD-42473"/>
<dbReference type="EMDB" id="EMD-42474"/>
<dbReference type="EMDB" id="EMD-42477"/>
<dbReference type="EMDB" id="EMD-42479"/>
<dbReference type="EMDB" id="EMD-42492"/>
<dbReference type="EMDB" id="EMD-42493"/>
<dbReference type="EMDB" id="EMD-42503"/>
<dbReference type="EMDB" id="EMD-42504"/>
<dbReference type="EMDB" id="EMD-43490"/>
<dbReference type="EMDB" id="EMD-43491"/>
<dbReference type="EMDB" id="EMD-50296"/>
<dbReference type="EMDB" id="EMD-51318"/>
<dbReference type="EMDB" id="EMD-51340"/>
<dbReference type="EMDB" id="EMD-51615"/>
<dbReference type="EMDB" id="EMD-51616"/>
<dbReference type="EMDB" id="EMD-51618"/>
<dbReference type="EMDB" id="EMD-51619"/>
<dbReference type="EMDB" id="EMD-51620"/>
<dbReference type="EMDB" id="EMD-51621"/>
<dbReference type="EMDB" id="EMD-51622"/>
<dbReference type="EMDB" id="EMD-51623"/>
<dbReference type="EMDB" id="EMD-6667"/>
<dbReference type="EMDB" id="EMD-7289"/>
<dbReference type="EMDB" id="EMD-7341"/>
<dbReference type="EMDB" id="EMD-8107"/>
<dbReference type="EMDB" id="EMD-8175"/>
<dbReference type="EMDB" id="EMD-8176"/>
<dbReference type="EMDB" id="EMD-8237"/>
<dbReference type="EMDB" id="EMD-8238"/>
<dbReference type="EMDB" id="EMD-8279"/>
<dbReference type="EMDB" id="EMD-8280"/>
<dbReference type="EMDB" id="EMD-8281"/>
<dbReference type="EMDB" id="EMD-8282"/>
<dbReference type="EMDB" id="EMD-8505"/>
<dbReference type="EMDB" id="EMD-8506"/>
<dbReference type="EMDB" id="EMD-8615"/>
<dbReference type="EMDB" id="EMD-8616"/>
<dbReference type="EMDB" id="EMD-8617"/>
<dbReference type="EMDB" id="EMD-8618"/>
<dbReference type="EMDB" id="EMD-8619"/>
<dbReference type="EMDB" id="EMD-8620"/>
<dbReference type="EMDB" id="EMD-8813"/>
<dbReference type="EMDB" id="EMD-8814"/>
<dbReference type="EMDB" id="EMD-8815"/>
<dbReference type="EMDB" id="EMD-8828"/>
<dbReference type="SMR" id="P0A7S3"/>
<dbReference type="BioGRID" id="4261614">
    <property type="interactions" value="15"/>
</dbReference>
<dbReference type="BioGRID" id="852156">
    <property type="interactions" value="6"/>
</dbReference>
<dbReference type="ComplexPortal" id="CPX-3802">
    <property type="entry name" value="30S small ribosomal subunit"/>
</dbReference>
<dbReference type="DIP" id="DIP-35806N"/>
<dbReference type="FunCoup" id="P0A7S3">
    <property type="interactions" value="862"/>
</dbReference>
<dbReference type="IntAct" id="P0A7S3">
    <property type="interactions" value="46"/>
</dbReference>
<dbReference type="STRING" id="511145.b3342"/>
<dbReference type="DrugBank" id="DB00479">
    <property type="generic name" value="Amikacin"/>
</dbReference>
<dbReference type="DrugBank" id="DB06696">
    <property type="generic name" value="Arbekacin"/>
</dbReference>
<dbReference type="DrugBank" id="DB00452">
    <property type="generic name" value="Framycetin"/>
</dbReference>
<dbReference type="DrugBank" id="DB00798">
    <property type="generic name" value="Gentamicin"/>
</dbReference>
<dbReference type="DrugBank" id="DB04729">
    <property type="generic name" value="Gentamicin C1a"/>
</dbReference>
<dbReference type="DrugBank" id="DB01172">
    <property type="generic name" value="Kanamycin"/>
</dbReference>
<dbReference type="DrugBank" id="DB00994">
    <property type="generic name" value="Neomycin"/>
</dbReference>
<dbReference type="DrugBank" id="DB00955">
    <property type="generic name" value="Netilmicin"/>
</dbReference>
<dbReference type="DrugBank" id="DB03615">
    <property type="generic name" value="Ribostamycin"/>
</dbReference>
<dbReference type="DrugBank" id="DB00919">
    <property type="generic name" value="Spectinomycin"/>
</dbReference>
<dbReference type="DrugBank" id="DB01082">
    <property type="generic name" value="Streptomycin"/>
</dbReference>
<dbReference type="DrugBank" id="DB00560">
    <property type="generic name" value="Tigecycline"/>
</dbReference>
<dbReference type="DrugCentral" id="P0A7S3"/>
<dbReference type="iPTMnet" id="P0A7S3"/>
<dbReference type="jPOST" id="P0A7S3"/>
<dbReference type="PaxDb" id="511145-b3342"/>
<dbReference type="EnsemblBacteria" id="AAC76367">
    <property type="protein sequence ID" value="AAC76367"/>
    <property type="gene ID" value="b3342"/>
</dbReference>
<dbReference type="GeneID" id="947845"/>
<dbReference type="GeneID" id="98390450"/>
<dbReference type="KEGG" id="ecj:JW3304"/>
<dbReference type="KEGG" id="eco:b3342"/>
<dbReference type="PATRIC" id="fig|1411691.4.peg.3389"/>
<dbReference type="EchoBASE" id="EB0904"/>
<dbReference type="eggNOG" id="COG0048">
    <property type="taxonomic scope" value="Bacteria"/>
</dbReference>
<dbReference type="HOGENOM" id="CLU_104295_1_2_6"/>
<dbReference type="InParanoid" id="P0A7S3"/>
<dbReference type="OMA" id="VCIRVYT"/>
<dbReference type="OrthoDB" id="9802366at2"/>
<dbReference type="PhylomeDB" id="P0A7S3"/>
<dbReference type="BioCyc" id="EcoCyc:EG10911-MONOMER"/>
<dbReference type="BioCyc" id="MetaCyc:EG10911-MONOMER"/>
<dbReference type="EvolutionaryTrace" id="P0A7S3"/>
<dbReference type="PRO" id="PR:P0A7S3"/>
<dbReference type="Proteomes" id="UP000000625">
    <property type="component" value="Chromosome"/>
</dbReference>
<dbReference type="GO" id="GO:0005737">
    <property type="term" value="C:cytoplasm"/>
    <property type="evidence" value="ECO:0000314"/>
    <property type="project" value="ComplexPortal"/>
</dbReference>
<dbReference type="GO" id="GO:0005829">
    <property type="term" value="C:cytosol"/>
    <property type="evidence" value="ECO:0000314"/>
    <property type="project" value="EcoCyc"/>
</dbReference>
<dbReference type="GO" id="GO:0022627">
    <property type="term" value="C:cytosolic small ribosomal subunit"/>
    <property type="evidence" value="ECO:0000314"/>
    <property type="project" value="EcoliWiki"/>
</dbReference>
<dbReference type="GO" id="GO:0005840">
    <property type="term" value="C:ribosome"/>
    <property type="evidence" value="ECO:0000318"/>
    <property type="project" value="GO_Central"/>
</dbReference>
<dbReference type="GO" id="GO:0034336">
    <property type="term" value="F:misfolded RNA binding"/>
    <property type="evidence" value="ECO:0000314"/>
    <property type="project" value="EcoCyc"/>
</dbReference>
<dbReference type="GO" id="GO:0019843">
    <property type="term" value="F:rRNA binding"/>
    <property type="evidence" value="ECO:0000314"/>
    <property type="project" value="EcoCyc"/>
</dbReference>
<dbReference type="GO" id="GO:0003735">
    <property type="term" value="F:structural constituent of ribosome"/>
    <property type="evidence" value="ECO:0000314"/>
    <property type="project" value="CAFA"/>
</dbReference>
<dbReference type="GO" id="GO:0000049">
    <property type="term" value="F:tRNA binding"/>
    <property type="evidence" value="ECO:0007669"/>
    <property type="project" value="UniProtKB-UniRule"/>
</dbReference>
<dbReference type="GO" id="GO:0002181">
    <property type="term" value="P:cytoplasmic translation"/>
    <property type="evidence" value="ECO:0000303"/>
    <property type="project" value="ComplexPortal"/>
</dbReference>
<dbReference type="GO" id="GO:0000372">
    <property type="term" value="P:Group I intron splicing"/>
    <property type="evidence" value="ECO:0000314"/>
    <property type="project" value="EcoCyc"/>
</dbReference>
<dbReference type="GO" id="GO:1990145">
    <property type="term" value="P:maintenance of translational fidelity"/>
    <property type="evidence" value="ECO:0000315"/>
    <property type="project" value="EcoCyc"/>
</dbReference>
<dbReference type="GO" id="GO:0033120">
    <property type="term" value="P:positive regulation of RNA splicing"/>
    <property type="evidence" value="ECO:0000314"/>
    <property type="project" value="EcoCyc"/>
</dbReference>
<dbReference type="GO" id="GO:0046677">
    <property type="term" value="P:response to antibiotic"/>
    <property type="evidence" value="ECO:0007669"/>
    <property type="project" value="UniProtKB-KW"/>
</dbReference>
<dbReference type="GO" id="GO:0034337">
    <property type="term" value="P:RNA folding"/>
    <property type="evidence" value="ECO:0000314"/>
    <property type="project" value="EcoCyc"/>
</dbReference>
<dbReference type="GO" id="GO:0006412">
    <property type="term" value="P:translation"/>
    <property type="evidence" value="ECO:0000315"/>
    <property type="project" value="EcoCyc"/>
</dbReference>
<dbReference type="CDD" id="cd03368">
    <property type="entry name" value="Ribosomal_S12"/>
    <property type="match status" value="1"/>
</dbReference>
<dbReference type="FunFam" id="2.40.50.140:FF:000001">
    <property type="entry name" value="30S ribosomal protein S12"/>
    <property type="match status" value="1"/>
</dbReference>
<dbReference type="Gene3D" id="2.40.50.140">
    <property type="entry name" value="Nucleic acid-binding proteins"/>
    <property type="match status" value="1"/>
</dbReference>
<dbReference type="HAMAP" id="MF_00403_B">
    <property type="entry name" value="Ribosomal_uS12_B"/>
    <property type="match status" value="1"/>
</dbReference>
<dbReference type="InterPro" id="IPR012340">
    <property type="entry name" value="NA-bd_OB-fold"/>
</dbReference>
<dbReference type="InterPro" id="IPR006032">
    <property type="entry name" value="Ribosomal_uS12"/>
</dbReference>
<dbReference type="InterPro" id="IPR005679">
    <property type="entry name" value="Ribosomal_uS12_bac"/>
</dbReference>
<dbReference type="NCBIfam" id="TIGR00981">
    <property type="entry name" value="rpsL_bact"/>
    <property type="match status" value="1"/>
</dbReference>
<dbReference type="PANTHER" id="PTHR11652">
    <property type="entry name" value="30S RIBOSOMAL PROTEIN S12 FAMILY MEMBER"/>
    <property type="match status" value="1"/>
</dbReference>
<dbReference type="Pfam" id="PF00164">
    <property type="entry name" value="Ribosom_S12_S23"/>
    <property type="match status" value="1"/>
</dbReference>
<dbReference type="PIRSF" id="PIRSF002133">
    <property type="entry name" value="Ribosomal_S12/S23"/>
    <property type="match status" value="1"/>
</dbReference>
<dbReference type="PRINTS" id="PR01034">
    <property type="entry name" value="RIBOSOMALS12"/>
</dbReference>
<dbReference type="SUPFAM" id="SSF50249">
    <property type="entry name" value="Nucleic acid-binding proteins"/>
    <property type="match status" value="1"/>
</dbReference>
<dbReference type="PROSITE" id="PS00055">
    <property type="entry name" value="RIBOSOMAL_S12"/>
    <property type="match status" value="1"/>
</dbReference>
<gene>
    <name type="primary">rpsL</name>
    <name type="synonym">strA</name>
    <name type="ordered locus">b3342</name>
    <name type="ordered locus">JW3304</name>
</gene>
<name>RS12_ECOLI</name>
<keyword id="KW-0002">3D-structure</keyword>
<keyword id="KW-0007">Acetylation</keyword>
<keyword id="KW-0046">Antibiotic resistance</keyword>
<keyword id="KW-0903">Direct protein sequencing</keyword>
<keyword id="KW-0488">Methylation</keyword>
<keyword id="KW-1185">Reference proteome</keyword>
<keyword id="KW-0687">Ribonucleoprotein</keyword>
<keyword id="KW-0689">Ribosomal protein</keyword>
<keyword id="KW-0694">RNA-binding</keyword>
<keyword id="KW-0699">rRNA-binding</keyword>
<keyword id="KW-0820">tRNA-binding</keyword>
<evidence type="ECO:0000250" key="1">
    <source>
        <dbReference type="UniProtKB" id="Q5SHN3"/>
    </source>
</evidence>
<evidence type="ECO:0000269" key="2">
    <source>
    </source>
</evidence>
<evidence type="ECO:0000269" key="3">
    <source>
    </source>
</evidence>
<evidence type="ECO:0000269" key="4">
    <source>
    </source>
</evidence>
<evidence type="ECO:0000269" key="5">
    <source>
    </source>
</evidence>
<evidence type="ECO:0000269" key="6">
    <source>
    </source>
</evidence>
<evidence type="ECO:0000269" key="7">
    <source>
    </source>
</evidence>
<evidence type="ECO:0000269" key="8">
    <source>
    </source>
</evidence>
<evidence type="ECO:0000269" key="9">
    <source>
    </source>
</evidence>
<evidence type="ECO:0000269" key="10">
    <source>
    </source>
</evidence>
<evidence type="ECO:0000269" key="11">
    <source>
    </source>
</evidence>
<evidence type="ECO:0000269" key="12">
    <source>
    </source>
</evidence>
<evidence type="ECO:0000269" key="13">
    <source>
    </source>
</evidence>
<evidence type="ECO:0000269" key="14">
    <source>
    </source>
</evidence>
<evidence type="ECO:0000269" key="15">
    <source>
    </source>
</evidence>
<evidence type="ECO:0000269" key="16">
    <source>
    </source>
</evidence>
<evidence type="ECO:0000269" key="17">
    <source ref="5"/>
</evidence>
<evidence type="ECO:0000303" key="18">
    <source>
    </source>
</evidence>
<evidence type="ECO:0000305" key="19"/>
<evidence type="ECO:0000305" key="20">
    <source>
    </source>
</evidence>
<evidence type="ECO:0007744" key="21">
    <source>
        <dbReference type="PDB" id="5MGP"/>
    </source>
</evidence>
<evidence type="ECO:0007829" key="22">
    <source>
        <dbReference type="PDB" id="7BOD"/>
    </source>
</evidence>
<evidence type="ECO:0007829" key="23">
    <source>
        <dbReference type="PDB" id="7NAS"/>
    </source>
</evidence>
<evidence type="ECO:0007829" key="24">
    <source>
        <dbReference type="PDB" id="7OE0"/>
    </source>
</evidence>
<evidence type="ECO:0007829" key="25">
    <source>
        <dbReference type="PDB" id="7OE1"/>
    </source>
</evidence>
<evidence type="ECO:0007829" key="26">
    <source>
        <dbReference type="PDB" id="8CGJ"/>
    </source>
</evidence>
<evidence type="ECO:0007829" key="27">
    <source>
        <dbReference type="PDB" id="8GHU"/>
    </source>
</evidence>
<reference key="1">
    <citation type="journal article" date="1977" name="FEBS Lett.">
        <title>Primary structure of protein S12 from the small Escherichia coli ribosomal subunit.</title>
        <authorList>
            <person name="Funatsu G."/>
            <person name="Yaguchi M."/>
            <person name="Wittmann-Liebold B."/>
        </authorList>
    </citation>
    <scope>PRELIMINARY PROTEIN SEQUENCE OF 2-124</scope>
    <scope>SUBUNIT</scope>
    <source>
        <strain>K</strain>
    </source>
</reference>
<reference key="2">
    <citation type="journal article" date="1980" name="J. Biol. Chem.">
        <title>DNA sequences from the str operon of Escherichia coli.</title>
        <authorList>
            <person name="Post L.E."/>
            <person name="Nomura M."/>
        </authorList>
    </citation>
    <scope>NUCLEOTIDE SEQUENCE [GENOMIC DNA]</scope>
    <source>
        <strain>K12</strain>
    </source>
</reference>
<reference key="3">
    <citation type="journal article" date="1992" name="Mol. Gen. Genet.">
        <title>Mutant sequences in the rpsL gene of Escherichia coli B/r: mechanistic implications for spontaneous and ultraviolet light mutagenesis.</title>
        <authorList>
            <person name="Timms A.R."/>
            <person name="Steingrimsdottir H."/>
            <person name="Lehmann A.R."/>
            <person name="Bridges B.A."/>
        </authorList>
    </citation>
    <scope>NUCLEOTIDE SEQUENCE [GENOMIC DNA]</scope>
    <scope>STREPTOMYCIN RESISTANT STRAINS</scope>
    <source>
        <strain>B/R WP2</strain>
    </source>
</reference>
<reference key="4">
    <citation type="journal article" date="1997" name="Science">
        <title>The complete genome sequence of Escherichia coli K-12.</title>
        <authorList>
            <person name="Blattner F.R."/>
            <person name="Plunkett G. III"/>
            <person name="Bloch C.A."/>
            <person name="Perna N.T."/>
            <person name="Burland V."/>
            <person name="Riley M."/>
            <person name="Collado-Vides J."/>
            <person name="Glasner J.D."/>
            <person name="Rode C.K."/>
            <person name="Mayhew G.F."/>
            <person name="Gregor J."/>
            <person name="Davis N.W."/>
            <person name="Kirkpatrick H.A."/>
            <person name="Goeden M.A."/>
            <person name="Rose D.J."/>
            <person name="Mau B."/>
            <person name="Shao Y."/>
        </authorList>
    </citation>
    <scope>NUCLEOTIDE SEQUENCE [LARGE SCALE GENOMIC DNA]</scope>
    <source>
        <strain>K12 / MG1655 / ATCC 47076</strain>
    </source>
</reference>
<reference key="5">
    <citation type="submission" date="2000-10" db="EMBL/GenBank/DDBJ databases">
        <title>Nucleotide information of the rpsL150 allele of MC4100, strain of Escherichia coli.</title>
        <authorList>
            <person name="Kharat A.S."/>
            <person name="Blot M."/>
        </authorList>
    </citation>
    <scope>NUCLEOTIDE SEQUENCE [GENOMIC DNA]</scope>
    <scope>VARIANT STREPTOMYCIN RESISTANT ARG-43</scope>
    <source>
        <strain>K12 / MC4100 / ATCC 35695 / DSM 6574</strain>
        <strain>K12 / W3110 / ZK126</strain>
    </source>
</reference>
<reference key="6">
    <citation type="journal article" date="2006" name="Mol. Syst. Biol.">
        <title>Highly accurate genome sequences of Escherichia coli K-12 strains MG1655 and W3110.</title>
        <authorList>
            <person name="Hayashi K."/>
            <person name="Morooka N."/>
            <person name="Yamamoto Y."/>
            <person name="Fujita K."/>
            <person name="Isono K."/>
            <person name="Choi S."/>
            <person name="Ohtsubo E."/>
            <person name="Baba T."/>
            <person name="Wanner B.L."/>
            <person name="Mori H."/>
            <person name="Horiuchi T."/>
        </authorList>
    </citation>
    <scope>NUCLEOTIDE SEQUENCE [LARGE SCALE GENOMIC DNA]</scope>
    <source>
        <strain>K12 / W3110 / ATCC 27325 / DSM 5911</strain>
    </source>
</reference>
<reference key="7">
    <citation type="journal article" date="1978" name="Cell">
        <title>DNA sequences of promoter regions for the str and spc ribosomal protein operons in E. coli.</title>
        <authorList>
            <person name="Post L.E."/>
            <person name="Arfsten A.E."/>
            <person name="Reusser F."/>
            <person name="Nomura M."/>
        </authorList>
    </citation>
    <scope>NUCLEOTIDE SEQUENCE [GENOMIC DNA] OF 1-21</scope>
    <source>
        <strain>K12</strain>
    </source>
</reference>
<reference key="8">
    <citation type="journal article" date="1995" name="EMBO J.">
        <title>Protein-rRNA binding features and their structural and functional implications in ribosomes as determined by cross-linking studies.</title>
        <authorList>
            <person name="Urlaub H."/>
            <person name="Kruft V."/>
            <person name="Bischof O."/>
            <person name="Mueller E.-C."/>
            <person name="Wittmann-Liebold B."/>
        </authorList>
    </citation>
    <scope>PROTEIN SEQUENCE OF 2-11</scope>
    <scope>CROSS-LINKING TO RRNA</scope>
    <scope>SUBUNIT</scope>
    <source>
        <strain>MRE-600</strain>
    </source>
</reference>
<reference key="9">
    <citation type="journal article" date="1989" name="J. Mol. Biol.">
        <title>Mutations in ribosomal proteins S4 and S12 influence the higher order structure of 16 S ribosomal RNA.</title>
        <authorList>
            <person name="Allen P.N."/>
            <person name="Noller H.F."/>
        </authorList>
    </citation>
    <scope>EFFECT OF MUTATIONS ON RRNA FOLDING</scope>
    <source>
        <strain>UD1A1</strain>
    </source>
</reference>
<reference key="10">
    <citation type="journal article" date="1999" name="Mol. Microbiol.">
        <title>Modelling in Escherichia coli of mutations in mitoribosomal protein S12: novel mutant phenotypes of rpsL.</title>
        <authorList>
            <person name="Toivonen J.M."/>
            <person name="Boocock M.R."/>
            <person name="Jacobs H.T."/>
        </authorList>
    </citation>
    <scope>MUTAGENESIS OF LEU-57 AND LYS-88</scope>
    <source>
        <strain>K12</strain>
    </source>
</reference>
<reference key="11">
    <citation type="journal article" date="1996" name="Protein Sci.">
        <title>Beta-methylthio-aspartic acid: identification of a novel posttranslational modification in ribosomal protein S12 from Escherichia coli.</title>
        <authorList>
            <person name="Kowalak J.A."/>
            <person name="Walsh K.A."/>
        </authorList>
    </citation>
    <scope>METHYLTHIOLATION AT ASP-89</scope>
</reference>
<reference key="12">
    <citation type="journal article" date="1999" name="Anal. Biochem.">
        <title>Observation of Escherichia coli ribosomal proteins and their posttranslational modifications by mass spectrometry.</title>
        <authorList>
            <person name="Arnold R.J."/>
            <person name="Reilly J.P."/>
        </authorList>
    </citation>
    <scope>MASS SPECTROMETRY</scope>
    <scope>SUBUNIT</scope>
    <source>
        <strain>K12 / ATCC 25404 / DSM 5698 / NCIMB 11290</strain>
    </source>
</reference>
<reference key="13">
    <citation type="journal article" date="2009" name="Mol. Cell. Proteomics">
        <title>Lysine acetylation is a highly abundant and evolutionarily conserved modification in Escherichia coli.</title>
        <authorList>
            <person name="Zhang J."/>
            <person name="Sprung R."/>
            <person name="Pei J."/>
            <person name="Tan X."/>
            <person name="Kim S."/>
            <person name="Zhu H."/>
            <person name="Liu C.F."/>
            <person name="Grishin N.V."/>
            <person name="Zhao Y."/>
        </authorList>
    </citation>
    <scope>ACETYLATION [LARGE SCALE ANALYSIS] AT LYS-108</scope>
    <scope>IDENTIFICATION BY MASS SPECTROMETRY</scope>
    <source>
        <strain>K12 / JW1106</strain>
        <strain>K12 / MG1655 / ATCC 47076</strain>
    </source>
</reference>
<reference key="14">
    <citation type="book" date="1996" name="Escherichia coli and Salmonella: Cellular and molecular biology (2nd ed.)">
        <title>Limitations of translational accuracy.</title>
        <editorList>
            <person name="Neidhardt F.C."/>
            <person name="Curtiss R. III"/>
            <person name="Ingraham J.L."/>
            <person name="Lin E.C.C."/>
            <person name="Low K.B. Magasanik B."/>
            <person name="Reznikoff W.S."/>
            <person name="Riley M."/>
            <person name="Schaechter M."/>
            <person name="Umbarger H.E."/>
        </editorList>
        <authorList>
            <person name="Kurland C.G."/>
            <person name="Hughes D."/>
            <person name="Ehrenberg M."/>
        </authorList>
    </citation>
    <scope>REVIEW ON TRANSLATIONAL ACCURACY</scope>
</reference>
<reference key="15">
    <citation type="journal article" date="2014" name="Curr. Opin. Struct. Biol.">
        <title>A new system for naming ribosomal proteins.</title>
        <authorList>
            <person name="Ban N."/>
            <person name="Beckmann R."/>
            <person name="Cate J.H.D."/>
            <person name="Dinman J.D."/>
            <person name="Dragon F."/>
            <person name="Ellis S.R."/>
            <person name="Lafontaine D.L.J."/>
            <person name="Lindahl L."/>
            <person name="Liljas A."/>
            <person name="Lipton J.M."/>
            <person name="McAlear M.A."/>
            <person name="Moore P.B."/>
            <person name="Noller H.F."/>
            <person name="Ortega J."/>
            <person name="Panse V.G."/>
            <person name="Ramakrishnan V."/>
            <person name="Spahn C.M.T."/>
            <person name="Steitz T.A."/>
            <person name="Tchorzewski M."/>
            <person name="Tollervey D."/>
            <person name="Warren A.J."/>
            <person name="Williamson J.R."/>
            <person name="Wilson D."/>
            <person name="Yonath A."/>
            <person name="Yusupov M."/>
        </authorList>
    </citation>
    <scope>NOMENCLATURE</scope>
</reference>
<reference key="16">
    <citation type="journal article" date="2002" name="EMBO J.">
        <title>Cryo-EM reveals an active role for aminoacyl-tRNA in the accommodation process.</title>
        <authorList>
            <person name="Valle M."/>
            <person name="Sengupta J."/>
            <person name="Swami N.K."/>
            <person name="Grassucci R.A."/>
            <person name="Burkhardt N."/>
            <person name="Nierhaus K.H."/>
            <person name="Agrawal R.K."/>
            <person name="Frank J."/>
        </authorList>
    </citation>
    <scope>STRUCTURE BY ELECTRON MICROSCOPY (11 ANGSTROMS) OF KIRROMYCIN-STALLED RIBOSOMES COMPLEXED WITH EF-TU/AMINOACYL-TRNA/GTP</scope>
    <scope>SUBUNIT</scope>
</reference>
<reference key="17">
    <citation type="journal article" date="2002" name="Nat. Struct. Biol.">
        <title>Ribosome interactions of aminoacyl-tRNA and elongation factor Tu in the codon-recognition complex.</title>
        <authorList>
            <person name="Stark H."/>
            <person name="Rodnina M.V."/>
            <person name="Wieden H.-J."/>
            <person name="Zemlin F."/>
            <person name="Wintermeyer W."/>
            <person name="Van Heel M."/>
        </authorList>
    </citation>
    <scope>STRUCTURE BY ELECTRON MICROSCOPY (13 ANGSTROMS) OF KIRROMYCIN-STALLED RIBOSOMES COMPLEXED WITH EF-TU/AMINOACYL-TRNA/GTP</scope>
    <scope>SUBUNIT</scope>
    <source>
        <strain>MRE-600</strain>
    </source>
</reference>
<reference key="18">
    <citation type="journal article" date="2002" name="Nat. Struct. Biol.">
        <title>All-atom homology model of the Escherichia coli 30S ribosomal subunit.</title>
        <authorList>
            <person name="Tung C.-S."/>
            <person name="Joseph S."/>
            <person name="Sanbonmatsu K.Y."/>
        </authorList>
    </citation>
    <scope>3D-STRUCTURE MODELING</scope>
    <scope>SUBUNIT</scope>
</reference>
<reference key="19">
    <citation type="journal article" date="2003" name="Cell">
        <title>Study of the structural dynamics of the E. coli 70S ribosome using real-space refinement.</title>
        <authorList>
            <person name="Gao H."/>
            <person name="Sengupta J."/>
            <person name="Valle M."/>
            <person name="Korostelev A."/>
            <person name="Eswar N."/>
            <person name="Stagg S.M."/>
            <person name="Van Roey P."/>
            <person name="Agrawal R.K."/>
            <person name="Harvey S.C."/>
            <person name="Sali A."/>
            <person name="Chapman M.S."/>
            <person name="Frank J."/>
        </authorList>
    </citation>
    <scope>STRUCTURE BY ELECTRON MICROSCOPY (11.50 ANGSTROMS)</scope>
    <scope>SUBUNIT</scope>
    <source>
        <strain>MRE-600</strain>
    </source>
</reference>
<reference key="20">
    <citation type="journal article" date="2005" name="Science">
        <title>Structures of the bacterial ribosome at 3.5 A resolution.</title>
        <authorList>
            <person name="Schuwirth B.S."/>
            <person name="Borovinskaya M.A."/>
            <person name="Hau C.W."/>
            <person name="Zhang W."/>
            <person name="Vila-Sanjurjo A."/>
            <person name="Holton J.M."/>
            <person name="Cate J.H.D."/>
        </authorList>
    </citation>
    <scope>X-RAY CRYSTALLOGRAPHY (3.46 ANGSTROMS) OF 2 DIFFERENT RIBOSOME STRUCTURES</scope>
    <scope>SUBUNIT</scope>
    <source>
        <strain>MRE-600</strain>
    </source>
</reference>
<reference key="21">
    <citation type="journal article" date="2017" name="Nature">
        <title>Mechanistic insights into the alternative translation termination by ArfA and RF2.</title>
        <authorList>
            <person name="Ma C."/>
            <person name="Kurita D."/>
            <person name="Li N."/>
            <person name="Chen Y."/>
            <person name="Himeno H."/>
            <person name="Gao N."/>
        </authorList>
    </citation>
    <scope>STRUCTURE BY ELECTRON MICROSCOPY (3.0 ANGSTROMS) OF 70S RIBOSOME IN COMPLEX WITH ARFA AND RF2</scope>
    <scope>INTERACTION WITH ARFA</scope>
    <scope>SUBUNIT</scope>
</reference>
<reference evidence="21" key="22">
    <citation type="journal article" date="2017" name="Nature">
        <title>Structural basis for ArfA-RF2-mediated translation termination on mRNAs lacking stop codons.</title>
        <authorList>
            <person name="Huter P."/>
            <person name="Mueller C."/>
            <person name="Beckert B."/>
            <person name="Arenz S."/>
            <person name="Berninghausen O."/>
            <person name="Beckmann R."/>
            <person name="Wilson D.N."/>
        </authorList>
    </citation>
    <scope>STRUCTURE BY ELECTRON MICROSCOPY (3.1 ANGSTROMS) OF 2-124 OF 70S RIBOSOME IN COMPLEX WITH ARFA AND RF2</scope>
    <scope>INTERACTION WITH RF2</scope>
    <scope>SUBUNIT</scope>
</reference>
<reference key="23">
    <citation type="journal article" date="2016" name="Science">
        <title>Translational termination without a stop codon.</title>
        <authorList>
            <person name="James N.R."/>
            <person name="Brown A."/>
            <person name="Gordiyenko Y."/>
            <person name="Ramakrishnan V."/>
        </authorList>
    </citation>
    <scope>STRUCTURE BY ELECTRON MICROSCOPY (2.97 ANGSTROMS) OF 70S RIBOSOME IN COMPLEX WITH ARFA AND RF2</scope>
    <scope>SUBUNIT</scope>
</reference>
<reference key="24">
    <citation type="journal article" date="2017" name="Nature">
        <title>Structural basis of co-translational quality control by ArfA and RF2 bound to ribosome.</title>
        <authorList>
            <person name="Zeng F."/>
            <person name="Chen Y."/>
            <person name="Remis J."/>
            <person name="Shekhar M."/>
            <person name="Phillips J.C."/>
            <person name="Tajkhorshid E."/>
            <person name="Jin H."/>
        </authorList>
    </citation>
    <scope>STRUCTURE BY ELECTRON MICROSCOPY (3.52 ANGSTROMS) OF 70S RIBOSOME IN COMPLEX WITH ARFA AND RF2</scope>
    <scope>SUBUNIT</scope>
</reference>
<comment type="function">
    <text>With S4 and S5 plays an important role in translational accuracy.</text>
</comment>
<comment type="function">
    <text evidence="1 15">Interacts with and stabilizes bases of the 16S rRNA that are involved in tRNA selection in the A site and with the mRNA backbone. Located at the interface of the 30S and 50S subunits, it traverses the body of the 30S subunit contacting proteins on the other side and probably holding the rRNA structure together. The combined cluster of proteins S8, S12 and S17 appears to hold together the shoulder and platform of the 30S subunit (By similarity).</text>
</comment>
<comment type="function">
    <text evidence="20">Cryo-EM studies suggest that S12 contacts the EF-Tu bound tRNA in the A-site during codon-recognition. This contact is most likely broken as the aminoacyl-tRNA moves into the peptidyl transferase center in the 50S subunit.</text>
</comment>
<comment type="subunit">
    <text evidence="1 2 4 5 6 7 9 11 12 13 14 15">Part of the 30S ribosomal subunit (PubMed:10094780, PubMed:12093756, PubMed:12244297, PubMed:12379845, PubMed:12809609, PubMed:16272117, PubMed:27906160, PubMed:27906161, PubMed:27934701, PubMed:320034, PubMed:7556101). Contacts proteins S8 and S17. Interacts with ArfA (PubMed:27906160, PubMed:27906161). May interact with IF1 in the 30S initiation complex (By similarity).</text>
</comment>
<comment type="interaction">
    <interactant intactId="EBI-543960">
        <id>P0A7S3</id>
    </interactant>
    <interactant intactId="EBI-561065">
        <id>P0A8A8</id>
        <label>rimP</label>
    </interactant>
    <organismsDiffer>false</organismsDiffer>
    <experiments>3</experiments>
</comment>
<comment type="mass spectrometry"/>
<comment type="miscellaneous">
    <text evidence="8 17">At least 19 substitutions or deletions in 11 codons can promote streptomycin resistance, dependence or pseudodependence; all but one of the streptomycin resistant mutations (K42R) are associated with hyperaccurate translation and thus reduced translational efficiency.</text>
</comment>
<comment type="miscellaneous">
    <text>The streptomycin sensitive allele is dominant to resistant alleles.</text>
</comment>
<comment type="similarity">
    <text evidence="19">Belongs to the universal ribosomal protein uS12 family.</text>
</comment>
<accession>P0A7S3</accession>
<accession>P02367</accession>
<accession>Q2M707</accession>
<accession>Q9F5N3</accession>
<protein>
    <recommendedName>
        <fullName evidence="18">Small ribosomal subunit protein uS12</fullName>
    </recommendedName>
    <alternativeName>
        <fullName>30S ribosomal protein S12</fullName>
    </alternativeName>
</protein>
<organism>
    <name type="scientific">Escherichia coli (strain K12)</name>
    <dbReference type="NCBI Taxonomy" id="83333"/>
    <lineage>
        <taxon>Bacteria</taxon>
        <taxon>Pseudomonadati</taxon>
        <taxon>Pseudomonadota</taxon>
        <taxon>Gammaproteobacteria</taxon>
        <taxon>Enterobacterales</taxon>
        <taxon>Enterobacteriaceae</taxon>
        <taxon>Escherichia</taxon>
    </lineage>
</organism>
<sequence>MATVNQLVRKPRARKVAKSNVPALEACPQKRGVCTRVYTTTPKKPNSALRKVCRVRLTNGFEVTSYIGGEGHNLQEHSVILIRGGRVKDLPGVRYHTVRGALDCSGVKDRKQARSKYGVKRPKA</sequence>
<feature type="initiator methionine" description="Removed" evidence="15">
    <location>
        <position position="1"/>
    </location>
</feature>
<feature type="chain" id="PRO_0000146219" description="Small ribosomal subunit protein uS12">
    <location>
        <begin position="2"/>
        <end position="124"/>
    </location>
</feature>
<feature type="modified residue" description="3-methylthioaspartic acid" evidence="16">
    <location>
        <position position="89"/>
    </location>
</feature>
<feature type="modified residue" description="N6-acetyllysine" evidence="10">
    <location>
        <position position="108"/>
    </location>
</feature>
<feature type="sequence variant" description="Confers streptomycin resistance but not hyperaccurate translation." evidence="17">
    <original>K</original>
    <variation>R</variation>
    <location>
        <position position="43"/>
    </location>
</feature>
<feature type="mutagenesis site" description="Protein is not incorporated into ribosomes." evidence="3">
    <original>L</original>
    <variation>H</variation>
    <location>
        <position position="57"/>
    </location>
</feature>
<feature type="mutagenesis site" description="Confers low-level resistance to streptomycin and a 15% decrease in the translational elongation rate." evidence="3">
    <original>K</original>
    <variation>Q</variation>
    <location>
        <position position="88"/>
    </location>
</feature>
<feature type="helix" evidence="26">
    <location>
        <begin position="4"/>
        <end position="9"/>
    </location>
</feature>
<feature type="helix" evidence="26">
    <location>
        <begin position="22"/>
        <end position="24"/>
    </location>
</feature>
<feature type="strand" evidence="26">
    <location>
        <begin position="28"/>
        <end position="40"/>
    </location>
</feature>
<feature type="strand" evidence="22">
    <location>
        <begin position="43"/>
        <end position="45"/>
    </location>
</feature>
<feature type="strand" evidence="26">
    <location>
        <begin position="50"/>
        <end position="57"/>
    </location>
</feature>
<feature type="strand" evidence="27">
    <location>
        <begin position="58"/>
        <end position="60"/>
    </location>
</feature>
<feature type="strand" evidence="26">
    <location>
        <begin position="62"/>
        <end position="66"/>
    </location>
</feature>
<feature type="strand" evidence="25">
    <location>
        <begin position="69"/>
        <end position="71"/>
    </location>
</feature>
<feature type="strand" evidence="26">
    <location>
        <begin position="79"/>
        <end position="84"/>
    </location>
</feature>
<feature type="strand" evidence="24">
    <location>
        <begin position="88"/>
        <end position="90"/>
    </location>
</feature>
<feature type="strand" evidence="26">
    <location>
        <begin position="95"/>
        <end position="97"/>
    </location>
</feature>
<feature type="strand" evidence="24">
    <location>
        <begin position="101"/>
        <end position="103"/>
    </location>
</feature>
<feature type="strand" evidence="23">
    <location>
        <begin position="111"/>
        <end position="113"/>
    </location>
</feature>
<feature type="helix" evidence="26">
    <location>
        <begin position="114"/>
        <end position="116"/>
    </location>
</feature>